<keyword id="KW-0968">Cytoplasmic vesicle</keyword>
<keyword id="KW-0217">Developmental protein</keyword>
<keyword id="KW-0221">Differentiation</keyword>
<keyword id="KW-0225">Disease variant</keyword>
<keyword id="KW-0333">Golgi apparatus</keyword>
<keyword id="KW-1267">Proteomics identification</keyword>
<keyword id="KW-1185">Reference proteome</keyword>
<keyword id="KW-0744">Spermatogenesis</keyword>
<name>SPT16_HUMAN</name>
<comment type="function">
    <text evidence="1 3">Essential for spermiogenesis and male fertility (By similarity). Involved in the formation of sperm acrosome during spermatogenesis.</text>
</comment>
<comment type="subcellular location">
    <subcellularLocation>
        <location evidence="3">Golgi apparatus</location>
    </subcellularLocation>
    <subcellularLocation>
        <location evidence="1">Cytoplasmic vesicle</location>
        <location evidence="1">Secretory vesicle</location>
        <location evidence="1">Acrosome</location>
    </subcellularLocation>
    <text evidence="1">Shift from Golgi to sperm acrosome.</text>
</comment>
<comment type="tissue specificity">
    <text evidence="3">Expressed in testis.</text>
</comment>
<comment type="disease" evidence="6">
    <disease id="DI-01666">
        <name>Spermatogenic failure 6</name>
        <acronym>SPGF6</acronym>
        <description>An infertility disorder caused by spermatogenesis defects. The most prominent feature is the malformation of the acrosome, which can be totally absent in most severe cases. Additional features are an abnormal nuclear shape and abnormal arrangement of the mitochondria of the spermatozoon.</description>
        <dbReference type="MIM" id="102530"/>
    </disease>
    <text>The disease is caused by variants affecting the gene represented in this entry. An autosomal recessive variation of SPATA16 has been shown to be responsible for the disease in a consanguineous family with members homozygous for the variation.</text>
</comment>
<comment type="miscellaneous">
    <text>Association analysis reveals significant frequency of a synonymous (Ser-225) sequence polymorphism among clinical groups with different sperm traits: the donor group, which has the highest sperm count and motility level, has a significant higher polymorphism frequency compared to normal and asthenozoopermia groups.</text>
</comment>
<comment type="similarity">
    <text evidence="7">Belongs to the SPATA16 family.</text>
</comment>
<proteinExistence type="evidence at protein level"/>
<organism>
    <name type="scientific">Homo sapiens</name>
    <name type="common">Human</name>
    <dbReference type="NCBI Taxonomy" id="9606"/>
    <lineage>
        <taxon>Eukaryota</taxon>
        <taxon>Metazoa</taxon>
        <taxon>Chordata</taxon>
        <taxon>Craniata</taxon>
        <taxon>Vertebrata</taxon>
        <taxon>Euteleostomi</taxon>
        <taxon>Mammalia</taxon>
        <taxon>Eutheria</taxon>
        <taxon>Euarchontoglires</taxon>
        <taxon>Primates</taxon>
        <taxon>Haplorrhini</taxon>
        <taxon>Catarrhini</taxon>
        <taxon>Hominidae</taxon>
        <taxon>Homo</taxon>
    </lineage>
</organism>
<dbReference type="EMBL" id="AF345909">
    <property type="protein sequence ID" value="AAK29063.2"/>
    <property type="molecule type" value="mRNA"/>
</dbReference>
<dbReference type="EMBL" id="AF404758">
    <property type="protein sequence ID" value="AAK95642.1"/>
    <property type="molecule type" value="mRNA"/>
</dbReference>
<dbReference type="EMBL" id="DQ141866">
    <property type="protein sequence ID" value="ABA27447.1"/>
    <property type="molecule type" value="Genomic_DNA"/>
</dbReference>
<dbReference type="EMBL" id="DQ141867">
    <property type="protein sequence ID" value="ABA27448.1"/>
    <property type="molecule type" value="Genomic_DNA"/>
</dbReference>
<dbReference type="EMBL" id="DQ141868">
    <property type="protein sequence ID" value="ABA27449.1"/>
    <property type="molecule type" value="Genomic_DNA"/>
</dbReference>
<dbReference type="EMBL" id="DQ141869">
    <property type="protein sequence ID" value="ABA27450.1"/>
    <property type="molecule type" value="Genomic_DNA"/>
</dbReference>
<dbReference type="EMBL" id="DQ141870">
    <property type="protein sequence ID" value="ABA27451.1"/>
    <property type="molecule type" value="Genomic_DNA"/>
</dbReference>
<dbReference type="EMBL" id="DQ141871">
    <property type="protein sequence ID" value="ABA27452.1"/>
    <property type="molecule type" value="Genomic_DNA"/>
</dbReference>
<dbReference type="EMBL" id="DQ141872">
    <property type="protein sequence ID" value="ABA27453.1"/>
    <property type="molecule type" value="Genomic_DNA"/>
</dbReference>
<dbReference type="EMBL" id="DQ141873">
    <property type="protein sequence ID" value="ABA27454.1"/>
    <property type="molecule type" value="Genomic_DNA"/>
</dbReference>
<dbReference type="EMBL" id="DQ141874">
    <property type="protein sequence ID" value="ABA27455.1"/>
    <property type="molecule type" value="Genomic_DNA"/>
</dbReference>
<dbReference type="EMBL" id="DQ141875">
    <property type="protein sequence ID" value="ABA27456.1"/>
    <property type="molecule type" value="Genomic_DNA"/>
</dbReference>
<dbReference type="EMBL" id="DQ141876">
    <property type="protein sequence ID" value="ABA27457.1"/>
    <property type="molecule type" value="Genomic_DNA"/>
</dbReference>
<dbReference type="EMBL" id="DQ141877">
    <property type="protein sequence ID" value="ABA27458.1"/>
    <property type="molecule type" value="Genomic_DNA"/>
</dbReference>
<dbReference type="EMBL" id="DQ141878">
    <property type="protein sequence ID" value="ABA27459.1"/>
    <property type="molecule type" value="Genomic_DNA"/>
</dbReference>
<dbReference type="EMBL" id="DQ141879">
    <property type="protein sequence ID" value="ABA27460.1"/>
    <property type="molecule type" value="Genomic_DNA"/>
</dbReference>
<dbReference type="EMBL" id="DQ141880">
    <property type="protein sequence ID" value="ABA27461.1"/>
    <property type="molecule type" value="Genomic_DNA"/>
</dbReference>
<dbReference type="EMBL" id="DQ141881">
    <property type="protein sequence ID" value="ABA27462.1"/>
    <property type="molecule type" value="Genomic_DNA"/>
</dbReference>
<dbReference type="EMBL" id="DQ141882">
    <property type="protein sequence ID" value="ABA27463.1"/>
    <property type="molecule type" value="Genomic_DNA"/>
</dbReference>
<dbReference type="EMBL" id="DQ141883">
    <property type="protein sequence ID" value="ABA27464.1"/>
    <property type="molecule type" value="Genomic_DNA"/>
</dbReference>
<dbReference type="EMBL" id="DQ141884">
    <property type="protein sequence ID" value="ABA27465.1"/>
    <property type="molecule type" value="Genomic_DNA"/>
</dbReference>
<dbReference type="EMBL" id="DQ141885">
    <property type="protein sequence ID" value="ABA27466.1"/>
    <property type="molecule type" value="Genomic_DNA"/>
</dbReference>
<dbReference type="EMBL" id="DQ141886">
    <property type="protein sequence ID" value="ABA27467.1"/>
    <property type="molecule type" value="Genomic_DNA"/>
</dbReference>
<dbReference type="EMBL" id="DQ141887">
    <property type="protein sequence ID" value="ABA27468.1"/>
    <property type="molecule type" value="Genomic_DNA"/>
</dbReference>
<dbReference type="EMBL" id="DQ141888">
    <property type="protein sequence ID" value="ABA27469.1"/>
    <property type="molecule type" value="Genomic_DNA"/>
</dbReference>
<dbReference type="EMBL" id="DQ141889">
    <property type="protein sequence ID" value="ABA27470.1"/>
    <property type="molecule type" value="Genomic_DNA"/>
</dbReference>
<dbReference type="EMBL" id="DQ141890">
    <property type="protein sequence ID" value="ABA27471.1"/>
    <property type="molecule type" value="Genomic_DNA"/>
</dbReference>
<dbReference type="EMBL" id="DQ141891">
    <property type="protein sequence ID" value="ABA27472.1"/>
    <property type="molecule type" value="Genomic_DNA"/>
</dbReference>
<dbReference type="EMBL" id="DQ141892">
    <property type="protein sequence ID" value="ABA27473.1"/>
    <property type="molecule type" value="Genomic_DNA"/>
</dbReference>
<dbReference type="EMBL" id="DQ141893">
    <property type="protein sequence ID" value="ABA27474.1"/>
    <property type="molecule type" value="Genomic_DNA"/>
</dbReference>
<dbReference type="EMBL" id="DQ141894">
    <property type="protein sequence ID" value="ABA27475.1"/>
    <property type="molecule type" value="Genomic_DNA"/>
</dbReference>
<dbReference type="EMBL" id="DQ141895">
    <property type="protein sequence ID" value="ABA27476.1"/>
    <property type="molecule type" value="Genomic_DNA"/>
</dbReference>
<dbReference type="EMBL" id="DQ141896">
    <property type="protein sequence ID" value="ABA27477.1"/>
    <property type="molecule type" value="Genomic_DNA"/>
</dbReference>
<dbReference type="EMBL" id="DQ141897">
    <property type="protein sequence ID" value="ABA27478.1"/>
    <property type="molecule type" value="Genomic_DNA"/>
</dbReference>
<dbReference type="EMBL" id="DQ141898">
    <property type="protein sequence ID" value="ABA27479.1"/>
    <property type="molecule type" value="Genomic_DNA"/>
</dbReference>
<dbReference type="EMBL" id="DQ141899">
    <property type="protein sequence ID" value="ABA27480.1"/>
    <property type="molecule type" value="Genomic_DNA"/>
</dbReference>
<dbReference type="EMBL" id="DQ141900">
    <property type="protein sequence ID" value="ABA27481.1"/>
    <property type="molecule type" value="Genomic_DNA"/>
</dbReference>
<dbReference type="EMBL" id="DQ141901">
    <property type="protein sequence ID" value="ABA27482.1"/>
    <property type="molecule type" value="Genomic_DNA"/>
</dbReference>
<dbReference type="EMBL" id="DQ141902">
    <property type="protein sequence ID" value="ABA27483.1"/>
    <property type="molecule type" value="Genomic_DNA"/>
</dbReference>
<dbReference type="EMBL" id="DQ141903">
    <property type="protein sequence ID" value="ABA27484.1"/>
    <property type="molecule type" value="Genomic_DNA"/>
</dbReference>
<dbReference type="EMBL" id="DQ141904">
    <property type="protein sequence ID" value="ABA27485.1"/>
    <property type="molecule type" value="Genomic_DNA"/>
</dbReference>
<dbReference type="EMBL" id="DQ141905">
    <property type="protein sequence ID" value="ABA27486.1"/>
    <property type="molecule type" value="Genomic_DNA"/>
</dbReference>
<dbReference type="EMBL" id="DQ141906">
    <property type="protein sequence ID" value="ABA27487.1"/>
    <property type="molecule type" value="Genomic_DNA"/>
</dbReference>
<dbReference type="EMBL" id="DQ141907">
    <property type="protein sequence ID" value="ABA27488.1"/>
    <property type="molecule type" value="Genomic_DNA"/>
</dbReference>
<dbReference type="EMBL" id="DQ141908">
    <property type="protein sequence ID" value="ABA27489.1"/>
    <property type="molecule type" value="Genomic_DNA"/>
</dbReference>
<dbReference type="EMBL" id="DQ141909">
    <property type="protein sequence ID" value="ABA27490.1"/>
    <property type="molecule type" value="Genomic_DNA"/>
</dbReference>
<dbReference type="EMBL" id="DQ141910">
    <property type="protein sequence ID" value="ABA27491.1"/>
    <property type="molecule type" value="Genomic_DNA"/>
</dbReference>
<dbReference type="EMBL" id="DQ141911">
    <property type="protein sequence ID" value="ABA27492.1"/>
    <property type="molecule type" value="Genomic_DNA"/>
</dbReference>
<dbReference type="EMBL" id="DQ141912">
    <property type="protein sequence ID" value="ABA27493.1"/>
    <property type="molecule type" value="Genomic_DNA"/>
</dbReference>
<dbReference type="EMBL" id="DQ141913">
    <property type="protein sequence ID" value="ABA27494.1"/>
    <property type="molecule type" value="Genomic_DNA"/>
</dbReference>
<dbReference type="EMBL" id="DQ141914">
    <property type="protein sequence ID" value="ABA27495.1"/>
    <property type="molecule type" value="Genomic_DNA"/>
</dbReference>
<dbReference type="EMBL" id="DQ141915">
    <property type="protein sequence ID" value="ABA27496.1"/>
    <property type="molecule type" value="Genomic_DNA"/>
</dbReference>
<dbReference type="EMBL" id="DQ141916">
    <property type="protein sequence ID" value="ABA27497.1"/>
    <property type="molecule type" value="Genomic_DNA"/>
</dbReference>
<dbReference type="EMBL" id="DQ141917">
    <property type="protein sequence ID" value="ABA27498.1"/>
    <property type="molecule type" value="Genomic_DNA"/>
</dbReference>
<dbReference type="EMBL" id="DQ141918">
    <property type="protein sequence ID" value="ABA27499.1"/>
    <property type="molecule type" value="Genomic_DNA"/>
</dbReference>
<dbReference type="EMBL" id="DQ141919">
    <property type="protein sequence ID" value="ABA27500.1"/>
    <property type="molecule type" value="Genomic_DNA"/>
</dbReference>
<dbReference type="EMBL" id="DQ141920">
    <property type="protein sequence ID" value="ABA27501.1"/>
    <property type="molecule type" value="Genomic_DNA"/>
</dbReference>
<dbReference type="EMBL" id="DQ141921">
    <property type="protein sequence ID" value="ABA27502.1"/>
    <property type="molecule type" value="Genomic_DNA"/>
</dbReference>
<dbReference type="EMBL" id="DQ141922">
    <property type="protein sequence ID" value="ABA27503.1"/>
    <property type="molecule type" value="Genomic_DNA"/>
</dbReference>
<dbReference type="EMBL" id="DQ141923">
    <property type="protein sequence ID" value="ABA27504.1"/>
    <property type="molecule type" value="Genomic_DNA"/>
</dbReference>
<dbReference type="EMBL" id="DQ141924">
    <property type="protein sequence ID" value="ABA27505.1"/>
    <property type="molecule type" value="Genomic_DNA"/>
</dbReference>
<dbReference type="EMBL" id="DQ141925">
    <property type="protein sequence ID" value="ABA27506.1"/>
    <property type="molecule type" value="Genomic_DNA"/>
</dbReference>
<dbReference type="EMBL" id="DQ141926">
    <property type="protein sequence ID" value="ABA27507.1"/>
    <property type="molecule type" value="Genomic_DNA"/>
</dbReference>
<dbReference type="EMBL" id="DQ141927">
    <property type="protein sequence ID" value="ABA27508.1"/>
    <property type="molecule type" value="Genomic_DNA"/>
</dbReference>
<dbReference type="EMBL" id="DQ141928">
    <property type="protein sequence ID" value="ABA27509.1"/>
    <property type="molecule type" value="Genomic_DNA"/>
</dbReference>
<dbReference type="EMBL" id="DQ141929">
    <property type="protein sequence ID" value="ABA27510.1"/>
    <property type="molecule type" value="Genomic_DNA"/>
</dbReference>
<dbReference type="EMBL" id="DQ141930">
    <property type="protein sequence ID" value="ABA27511.1"/>
    <property type="molecule type" value="Genomic_DNA"/>
</dbReference>
<dbReference type="EMBL" id="DQ141931">
    <property type="protein sequence ID" value="ABA27512.1"/>
    <property type="molecule type" value="Genomic_DNA"/>
</dbReference>
<dbReference type="EMBL" id="DQ141932">
    <property type="protein sequence ID" value="ABA27513.1"/>
    <property type="molecule type" value="Genomic_DNA"/>
</dbReference>
<dbReference type="EMBL" id="DQ141933">
    <property type="protein sequence ID" value="ABA27514.1"/>
    <property type="molecule type" value="Genomic_DNA"/>
</dbReference>
<dbReference type="EMBL" id="DQ141934">
    <property type="protein sequence ID" value="ABA27515.1"/>
    <property type="molecule type" value="Genomic_DNA"/>
</dbReference>
<dbReference type="EMBL" id="DQ141935">
    <property type="protein sequence ID" value="ABA27516.1"/>
    <property type="molecule type" value="Genomic_DNA"/>
</dbReference>
<dbReference type="EMBL" id="DQ141936">
    <property type="protein sequence ID" value="ABA27517.1"/>
    <property type="molecule type" value="Genomic_DNA"/>
</dbReference>
<dbReference type="EMBL" id="DQ141937">
    <property type="protein sequence ID" value="ABA27518.1"/>
    <property type="molecule type" value="Genomic_DNA"/>
</dbReference>
<dbReference type="EMBL" id="DQ141944">
    <property type="protein sequence ID" value="ABA27519.1"/>
    <property type="molecule type" value="Genomic_DNA"/>
</dbReference>
<dbReference type="EMBL" id="DQ141945">
    <property type="protein sequence ID" value="ABA27520.1"/>
    <property type="molecule type" value="Genomic_DNA"/>
</dbReference>
<dbReference type="EMBL" id="DQ141946">
    <property type="protein sequence ID" value="ABA27521.1"/>
    <property type="molecule type" value="Genomic_DNA"/>
</dbReference>
<dbReference type="EMBL" id="DQ141947">
    <property type="protein sequence ID" value="ABA27522.1"/>
    <property type="molecule type" value="Genomic_DNA"/>
</dbReference>
<dbReference type="EMBL" id="DQ141948">
    <property type="protein sequence ID" value="ABA27523.1"/>
    <property type="molecule type" value="Genomic_DNA"/>
</dbReference>
<dbReference type="EMBL" id="DQ141949">
    <property type="protein sequence ID" value="ABA27524.1"/>
    <property type="molecule type" value="Genomic_DNA"/>
</dbReference>
<dbReference type="EMBL" id="DQ141950">
    <property type="protein sequence ID" value="ABA27525.1"/>
    <property type="molecule type" value="Genomic_DNA"/>
</dbReference>
<dbReference type="EMBL" id="DQ141951">
    <property type="protein sequence ID" value="ABA27526.1"/>
    <property type="molecule type" value="Genomic_DNA"/>
</dbReference>
<dbReference type="EMBL" id="DQ141952">
    <property type="protein sequence ID" value="ABA27527.1"/>
    <property type="molecule type" value="Genomic_DNA"/>
</dbReference>
<dbReference type="EMBL" id="DQ141953">
    <property type="protein sequence ID" value="ABA27528.1"/>
    <property type="molecule type" value="Genomic_DNA"/>
</dbReference>
<dbReference type="EMBL" id="DQ141954">
    <property type="protein sequence ID" value="ABA27529.1"/>
    <property type="molecule type" value="Genomic_DNA"/>
</dbReference>
<dbReference type="EMBL" id="DQ141955">
    <property type="protein sequence ID" value="ABA27530.1"/>
    <property type="molecule type" value="Genomic_DNA"/>
</dbReference>
<dbReference type="EMBL" id="DQ141956">
    <property type="protein sequence ID" value="ABA27531.1"/>
    <property type="molecule type" value="Genomic_DNA"/>
</dbReference>
<dbReference type="EMBL" id="DQ141957">
    <property type="protein sequence ID" value="ABA27532.1"/>
    <property type="molecule type" value="Genomic_DNA"/>
</dbReference>
<dbReference type="EMBL" id="DQ141958">
    <property type="protein sequence ID" value="ABA27533.1"/>
    <property type="molecule type" value="Genomic_DNA"/>
</dbReference>
<dbReference type="EMBL" id="DQ141959">
    <property type="protein sequence ID" value="ABA27534.1"/>
    <property type="molecule type" value="Genomic_DNA"/>
</dbReference>
<dbReference type="EMBL" id="DQ141960">
    <property type="protein sequence ID" value="ABA27535.1"/>
    <property type="molecule type" value="Genomic_DNA"/>
</dbReference>
<dbReference type="EMBL" id="DQ141961">
    <property type="protein sequence ID" value="ABA27536.1"/>
    <property type="molecule type" value="Genomic_DNA"/>
</dbReference>
<dbReference type="EMBL" id="DQ141962">
    <property type="protein sequence ID" value="ABA27537.1"/>
    <property type="molecule type" value="Genomic_DNA"/>
</dbReference>
<dbReference type="EMBL" id="DQ141963">
    <property type="protein sequence ID" value="ABA27538.1"/>
    <property type="molecule type" value="Genomic_DNA"/>
</dbReference>
<dbReference type="EMBL" id="DQ141964">
    <property type="protein sequence ID" value="ABA27539.1"/>
    <property type="molecule type" value="Genomic_DNA"/>
</dbReference>
<dbReference type="EMBL" id="DQ141965">
    <property type="protein sequence ID" value="ABA27540.1"/>
    <property type="molecule type" value="Genomic_DNA"/>
</dbReference>
<dbReference type="EMBL" id="DQ141966">
    <property type="protein sequence ID" value="ABA27541.1"/>
    <property type="molecule type" value="Genomic_DNA"/>
</dbReference>
<dbReference type="EMBL" id="DQ141967">
    <property type="protein sequence ID" value="ABA27542.1"/>
    <property type="molecule type" value="Genomic_DNA"/>
</dbReference>
<dbReference type="EMBL" id="DQ141968">
    <property type="protein sequence ID" value="ABA27543.1"/>
    <property type="molecule type" value="Genomic_DNA"/>
</dbReference>
<dbReference type="EMBL" id="DQ141969">
    <property type="protein sequence ID" value="ABA27544.1"/>
    <property type="molecule type" value="Genomic_DNA"/>
</dbReference>
<dbReference type="EMBL" id="DQ141970">
    <property type="protein sequence ID" value="ABA27545.1"/>
    <property type="molecule type" value="Genomic_DNA"/>
</dbReference>
<dbReference type="EMBL" id="DQ141971">
    <property type="protein sequence ID" value="ABA27546.1"/>
    <property type="molecule type" value="Genomic_DNA"/>
</dbReference>
<dbReference type="EMBL" id="DQ141972">
    <property type="protein sequence ID" value="ABA27547.1"/>
    <property type="molecule type" value="Genomic_DNA"/>
</dbReference>
<dbReference type="EMBL" id="DQ141973">
    <property type="protein sequence ID" value="ABA27548.1"/>
    <property type="molecule type" value="Genomic_DNA"/>
</dbReference>
<dbReference type="EMBL" id="DQ141974">
    <property type="protein sequence ID" value="ABA27549.1"/>
    <property type="molecule type" value="Genomic_DNA"/>
</dbReference>
<dbReference type="EMBL" id="DQ141975">
    <property type="protein sequence ID" value="ABA27550.1"/>
    <property type="molecule type" value="Genomic_DNA"/>
</dbReference>
<dbReference type="EMBL" id="DQ141976">
    <property type="protein sequence ID" value="ABA27551.1"/>
    <property type="molecule type" value="Genomic_DNA"/>
</dbReference>
<dbReference type="EMBL" id="DQ141977">
    <property type="protein sequence ID" value="ABA27552.1"/>
    <property type="molecule type" value="Genomic_DNA"/>
</dbReference>
<dbReference type="EMBL" id="DQ141978">
    <property type="protein sequence ID" value="ABA27553.1"/>
    <property type="molecule type" value="Genomic_DNA"/>
</dbReference>
<dbReference type="EMBL" id="DQ141979">
    <property type="protein sequence ID" value="ABA27554.1"/>
    <property type="molecule type" value="Genomic_DNA"/>
</dbReference>
<dbReference type="EMBL" id="DQ141980">
    <property type="protein sequence ID" value="ABA27555.1"/>
    <property type="molecule type" value="Genomic_DNA"/>
</dbReference>
<dbReference type="EMBL" id="DQ141981">
    <property type="protein sequence ID" value="ABA27556.1"/>
    <property type="molecule type" value="Genomic_DNA"/>
</dbReference>
<dbReference type="EMBL" id="DQ141982">
    <property type="protein sequence ID" value="ABA27557.1"/>
    <property type="molecule type" value="Genomic_DNA"/>
</dbReference>
<dbReference type="EMBL" id="DQ141983">
    <property type="protein sequence ID" value="ABA27558.1"/>
    <property type="molecule type" value="Genomic_DNA"/>
</dbReference>
<dbReference type="EMBL" id="DQ141984">
    <property type="protein sequence ID" value="ABA27559.1"/>
    <property type="molecule type" value="Genomic_DNA"/>
</dbReference>
<dbReference type="EMBL" id="DQ141985">
    <property type="protein sequence ID" value="ABA27560.1"/>
    <property type="molecule type" value="Genomic_DNA"/>
</dbReference>
<dbReference type="EMBL" id="DQ141986">
    <property type="protein sequence ID" value="ABA27561.1"/>
    <property type="molecule type" value="Genomic_DNA"/>
</dbReference>
<dbReference type="EMBL" id="DQ141987">
    <property type="protein sequence ID" value="ABA27562.1"/>
    <property type="molecule type" value="Genomic_DNA"/>
</dbReference>
<dbReference type="EMBL" id="DQ141988">
    <property type="protein sequence ID" value="ABA27563.1"/>
    <property type="molecule type" value="Genomic_DNA"/>
</dbReference>
<dbReference type="EMBL" id="DQ141989">
    <property type="protein sequence ID" value="ABA27564.1"/>
    <property type="molecule type" value="Genomic_DNA"/>
</dbReference>
<dbReference type="EMBL" id="DQ141990">
    <property type="protein sequence ID" value="ABA27565.1"/>
    <property type="molecule type" value="Genomic_DNA"/>
</dbReference>
<dbReference type="EMBL" id="DQ141991">
    <property type="protein sequence ID" value="ABA27566.1"/>
    <property type="molecule type" value="Genomic_DNA"/>
</dbReference>
<dbReference type="EMBL" id="DQ141992">
    <property type="protein sequence ID" value="ABA27567.1"/>
    <property type="molecule type" value="Genomic_DNA"/>
</dbReference>
<dbReference type="EMBL" id="DQ141993">
    <property type="protein sequence ID" value="ABA27568.1"/>
    <property type="molecule type" value="Genomic_DNA"/>
</dbReference>
<dbReference type="EMBL" id="DQ141994">
    <property type="protein sequence ID" value="ABA27569.1"/>
    <property type="molecule type" value="Genomic_DNA"/>
</dbReference>
<dbReference type="EMBL" id="DQ141995">
    <property type="protein sequence ID" value="ABA27570.1"/>
    <property type="molecule type" value="Genomic_DNA"/>
</dbReference>
<dbReference type="EMBL" id="DQ141996">
    <property type="protein sequence ID" value="ABA27571.1"/>
    <property type="molecule type" value="Genomic_DNA"/>
</dbReference>
<dbReference type="EMBL" id="DQ141997">
    <property type="protein sequence ID" value="ABA27572.1"/>
    <property type="molecule type" value="Genomic_DNA"/>
</dbReference>
<dbReference type="EMBL" id="DQ141998">
    <property type="protein sequence ID" value="ABA27573.1"/>
    <property type="molecule type" value="Genomic_DNA"/>
</dbReference>
<dbReference type="EMBL" id="DQ141999">
    <property type="protein sequence ID" value="ABA27574.1"/>
    <property type="molecule type" value="Genomic_DNA"/>
</dbReference>
<dbReference type="EMBL" id="DQ142000">
    <property type="protein sequence ID" value="ABA27575.1"/>
    <property type="molecule type" value="Genomic_DNA"/>
</dbReference>
<dbReference type="EMBL" id="DQ142001">
    <property type="protein sequence ID" value="ABA27576.1"/>
    <property type="molecule type" value="Genomic_DNA"/>
</dbReference>
<dbReference type="EMBL" id="DQ142002">
    <property type="protein sequence ID" value="ABA27577.1"/>
    <property type="molecule type" value="Genomic_DNA"/>
</dbReference>
<dbReference type="EMBL" id="DQ142003">
    <property type="protein sequence ID" value="ABA27578.1"/>
    <property type="molecule type" value="Genomic_DNA"/>
</dbReference>
<dbReference type="EMBL" id="DQ142004">
    <property type="protein sequence ID" value="ABA27579.1"/>
    <property type="molecule type" value="Genomic_DNA"/>
</dbReference>
<dbReference type="EMBL" id="DQ142005">
    <property type="protein sequence ID" value="ABA27580.1"/>
    <property type="molecule type" value="Genomic_DNA"/>
</dbReference>
<dbReference type="EMBL" id="DQ142006">
    <property type="protein sequence ID" value="ABA27581.1"/>
    <property type="molecule type" value="Genomic_DNA"/>
</dbReference>
<dbReference type="EMBL" id="DQ142007">
    <property type="protein sequence ID" value="ABA27582.1"/>
    <property type="molecule type" value="Genomic_DNA"/>
</dbReference>
<dbReference type="EMBL" id="DQ142008">
    <property type="protein sequence ID" value="ABA27583.1"/>
    <property type="molecule type" value="Genomic_DNA"/>
</dbReference>
<dbReference type="EMBL" id="DQ142009">
    <property type="protein sequence ID" value="ABA27584.1"/>
    <property type="molecule type" value="Genomic_DNA"/>
</dbReference>
<dbReference type="EMBL" id="DQ142010">
    <property type="protein sequence ID" value="ABA27585.1"/>
    <property type="molecule type" value="Genomic_DNA"/>
</dbReference>
<dbReference type="EMBL" id="DQ142011">
    <property type="protein sequence ID" value="ABA27586.1"/>
    <property type="molecule type" value="Genomic_DNA"/>
</dbReference>
<dbReference type="EMBL" id="DQ142012">
    <property type="protein sequence ID" value="ABA27587.1"/>
    <property type="molecule type" value="Genomic_DNA"/>
</dbReference>
<dbReference type="EMBL" id="DQ142013">
    <property type="protein sequence ID" value="ABA27588.1"/>
    <property type="molecule type" value="Genomic_DNA"/>
</dbReference>
<dbReference type="EMBL" id="DQ142014">
    <property type="protein sequence ID" value="ABA27589.1"/>
    <property type="molecule type" value="Genomic_DNA"/>
</dbReference>
<dbReference type="EMBL" id="DQ142015">
    <property type="protein sequence ID" value="ABA27590.1"/>
    <property type="molecule type" value="Genomic_DNA"/>
</dbReference>
<dbReference type="EMBL" id="DQ142022">
    <property type="protein sequence ID" value="ABA27591.1"/>
    <property type="molecule type" value="Genomic_DNA"/>
</dbReference>
<dbReference type="EMBL" id="DQ142023">
    <property type="protein sequence ID" value="ABA27592.1"/>
    <property type="molecule type" value="Genomic_DNA"/>
</dbReference>
<dbReference type="EMBL" id="DQ142024">
    <property type="protein sequence ID" value="ABA27593.1"/>
    <property type="molecule type" value="Genomic_DNA"/>
</dbReference>
<dbReference type="EMBL" id="DQ142025">
    <property type="protein sequence ID" value="ABA27594.1"/>
    <property type="molecule type" value="Genomic_DNA"/>
</dbReference>
<dbReference type="EMBL" id="DQ142026">
    <property type="protein sequence ID" value="ABA27595.1"/>
    <property type="molecule type" value="Genomic_DNA"/>
</dbReference>
<dbReference type="EMBL" id="DQ142027">
    <property type="protein sequence ID" value="ABA27596.1"/>
    <property type="molecule type" value="Genomic_DNA"/>
</dbReference>
<dbReference type="EMBL" id="DQ142028">
    <property type="protein sequence ID" value="ABA27597.1"/>
    <property type="molecule type" value="Genomic_DNA"/>
</dbReference>
<dbReference type="EMBL" id="DQ142029">
    <property type="protein sequence ID" value="ABA27598.1"/>
    <property type="molecule type" value="Genomic_DNA"/>
</dbReference>
<dbReference type="EMBL" id="DQ142030">
    <property type="protein sequence ID" value="ABA27599.1"/>
    <property type="molecule type" value="Genomic_DNA"/>
</dbReference>
<dbReference type="EMBL" id="DQ142031">
    <property type="protein sequence ID" value="ABA27600.1"/>
    <property type="molecule type" value="Genomic_DNA"/>
</dbReference>
<dbReference type="EMBL" id="DQ142032">
    <property type="protein sequence ID" value="ABA27601.1"/>
    <property type="molecule type" value="Genomic_DNA"/>
</dbReference>
<dbReference type="EMBL" id="DQ142033">
    <property type="protein sequence ID" value="ABA27602.1"/>
    <property type="molecule type" value="Genomic_DNA"/>
</dbReference>
<dbReference type="EMBL" id="DQ142034">
    <property type="protein sequence ID" value="ABA27603.1"/>
    <property type="molecule type" value="Genomic_DNA"/>
</dbReference>
<dbReference type="EMBL" id="DQ142035">
    <property type="protein sequence ID" value="ABA27604.1"/>
    <property type="molecule type" value="Genomic_DNA"/>
</dbReference>
<dbReference type="EMBL" id="DQ142036">
    <property type="protein sequence ID" value="ABA27605.1"/>
    <property type="molecule type" value="Genomic_DNA"/>
</dbReference>
<dbReference type="EMBL" id="DQ142037">
    <property type="protein sequence ID" value="ABA27606.1"/>
    <property type="molecule type" value="Genomic_DNA"/>
</dbReference>
<dbReference type="EMBL" id="DQ142038">
    <property type="protein sequence ID" value="ABA27607.1"/>
    <property type="molecule type" value="Genomic_DNA"/>
</dbReference>
<dbReference type="EMBL" id="DQ142039">
    <property type="protein sequence ID" value="ABA27608.1"/>
    <property type="molecule type" value="Genomic_DNA"/>
</dbReference>
<dbReference type="EMBL" id="DQ142040">
    <property type="protein sequence ID" value="ABA27609.1"/>
    <property type="molecule type" value="Genomic_DNA"/>
</dbReference>
<dbReference type="EMBL" id="DQ142041">
    <property type="protein sequence ID" value="ABA27610.1"/>
    <property type="molecule type" value="Genomic_DNA"/>
</dbReference>
<dbReference type="EMBL" id="DQ142042">
    <property type="protein sequence ID" value="ABA27611.1"/>
    <property type="molecule type" value="Genomic_DNA"/>
</dbReference>
<dbReference type="EMBL" id="DQ142043">
    <property type="protein sequence ID" value="ABA27612.1"/>
    <property type="molecule type" value="Genomic_DNA"/>
</dbReference>
<dbReference type="EMBL" id="DQ142044">
    <property type="protein sequence ID" value="ABA27613.1"/>
    <property type="molecule type" value="Genomic_DNA"/>
</dbReference>
<dbReference type="EMBL" id="DQ142045">
    <property type="protein sequence ID" value="ABA27614.1"/>
    <property type="molecule type" value="Genomic_DNA"/>
</dbReference>
<dbReference type="EMBL" id="DQ142046">
    <property type="protein sequence ID" value="ABA27615.1"/>
    <property type="molecule type" value="Genomic_DNA"/>
</dbReference>
<dbReference type="EMBL" id="DQ142047">
    <property type="protein sequence ID" value="ABA27616.1"/>
    <property type="molecule type" value="Genomic_DNA"/>
</dbReference>
<dbReference type="EMBL" id="DQ142048">
    <property type="protein sequence ID" value="ABA27617.1"/>
    <property type="molecule type" value="Genomic_DNA"/>
</dbReference>
<dbReference type="EMBL" id="DQ142049">
    <property type="protein sequence ID" value="ABA27618.1"/>
    <property type="molecule type" value="Genomic_DNA"/>
</dbReference>
<dbReference type="EMBL" id="DQ142050">
    <property type="protein sequence ID" value="ABA27619.1"/>
    <property type="molecule type" value="Genomic_DNA"/>
</dbReference>
<dbReference type="EMBL" id="DQ142051">
    <property type="protein sequence ID" value="ABA27620.1"/>
    <property type="molecule type" value="Genomic_DNA"/>
</dbReference>
<dbReference type="EMBL" id="DQ142052">
    <property type="protein sequence ID" value="ABA27621.1"/>
    <property type="molecule type" value="Genomic_DNA"/>
</dbReference>
<dbReference type="EMBL" id="DQ142053">
    <property type="protein sequence ID" value="ABA27622.1"/>
    <property type="molecule type" value="Genomic_DNA"/>
</dbReference>
<dbReference type="EMBL" id="DQ142054">
    <property type="protein sequence ID" value="ABA27623.1"/>
    <property type="molecule type" value="Genomic_DNA"/>
</dbReference>
<dbReference type="EMBL" id="DQ142055">
    <property type="protein sequence ID" value="ABA27624.1"/>
    <property type="molecule type" value="Genomic_DNA"/>
</dbReference>
<dbReference type="EMBL" id="DQ142056">
    <property type="protein sequence ID" value="ABA27625.1"/>
    <property type="molecule type" value="Genomic_DNA"/>
</dbReference>
<dbReference type="EMBL" id="DQ142057">
    <property type="protein sequence ID" value="ABA27626.1"/>
    <property type="molecule type" value="Genomic_DNA"/>
</dbReference>
<dbReference type="EMBL" id="DQ142058">
    <property type="protein sequence ID" value="ABA27627.1"/>
    <property type="molecule type" value="Genomic_DNA"/>
</dbReference>
<dbReference type="EMBL" id="DQ142059">
    <property type="protein sequence ID" value="ABA27628.1"/>
    <property type="molecule type" value="Genomic_DNA"/>
</dbReference>
<dbReference type="EMBL" id="DQ142060">
    <property type="protein sequence ID" value="ABA27629.1"/>
    <property type="molecule type" value="Genomic_DNA"/>
</dbReference>
<dbReference type="EMBL" id="DQ142061">
    <property type="protein sequence ID" value="ABA27630.1"/>
    <property type="molecule type" value="Genomic_DNA"/>
</dbReference>
<dbReference type="EMBL" id="DQ142062">
    <property type="protein sequence ID" value="ABA27631.1"/>
    <property type="molecule type" value="Genomic_DNA"/>
</dbReference>
<dbReference type="EMBL" id="DQ142063">
    <property type="protein sequence ID" value="ABA27632.1"/>
    <property type="molecule type" value="Genomic_DNA"/>
</dbReference>
<dbReference type="EMBL" id="DQ142064">
    <property type="protein sequence ID" value="ABA27633.1"/>
    <property type="molecule type" value="Genomic_DNA"/>
</dbReference>
<dbReference type="EMBL" id="DQ142065">
    <property type="protein sequence ID" value="ABA27634.1"/>
    <property type="molecule type" value="Genomic_DNA"/>
</dbReference>
<dbReference type="EMBL" id="DQ142066">
    <property type="protein sequence ID" value="ABA27635.1"/>
    <property type="molecule type" value="Genomic_DNA"/>
</dbReference>
<dbReference type="EMBL" id="DQ142067">
    <property type="protein sequence ID" value="ABA27636.1"/>
    <property type="molecule type" value="Genomic_DNA"/>
</dbReference>
<dbReference type="EMBL" id="DQ142068">
    <property type="protein sequence ID" value="ABA27637.1"/>
    <property type="molecule type" value="Genomic_DNA"/>
</dbReference>
<dbReference type="EMBL" id="DQ142069">
    <property type="protein sequence ID" value="ABA27638.1"/>
    <property type="molecule type" value="Genomic_DNA"/>
</dbReference>
<dbReference type="EMBL" id="DQ142070">
    <property type="protein sequence ID" value="ABA27639.1"/>
    <property type="molecule type" value="Genomic_DNA"/>
</dbReference>
<dbReference type="EMBL" id="DQ142071">
    <property type="protein sequence ID" value="ABA27640.1"/>
    <property type="molecule type" value="Genomic_DNA"/>
</dbReference>
<dbReference type="EMBL" id="DQ142072">
    <property type="protein sequence ID" value="ABA27641.1"/>
    <property type="molecule type" value="Genomic_DNA"/>
</dbReference>
<dbReference type="EMBL" id="DQ142073">
    <property type="protein sequence ID" value="ABA27642.1"/>
    <property type="molecule type" value="Genomic_DNA"/>
</dbReference>
<dbReference type="EMBL" id="DQ142074">
    <property type="protein sequence ID" value="ABA27643.1"/>
    <property type="molecule type" value="Genomic_DNA"/>
</dbReference>
<dbReference type="EMBL" id="DQ142075">
    <property type="protein sequence ID" value="ABA27644.1"/>
    <property type="molecule type" value="Genomic_DNA"/>
</dbReference>
<dbReference type="EMBL" id="DQ142076">
    <property type="protein sequence ID" value="ABA27645.1"/>
    <property type="molecule type" value="Genomic_DNA"/>
</dbReference>
<dbReference type="EMBL" id="DQ142077">
    <property type="protein sequence ID" value="ABA27646.1"/>
    <property type="molecule type" value="Genomic_DNA"/>
</dbReference>
<dbReference type="EMBL" id="DQ142078">
    <property type="protein sequence ID" value="ABA27647.1"/>
    <property type="molecule type" value="Genomic_DNA"/>
</dbReference>
<dbReference type="EMBL" id="DQ142079">
    <property type="protein sequence ID" value="ABA27648.1"/>
    <property type="molecule type" value="Genomic_DNA"/>
</dbReference>
<dbReference type="EMBL" id="DQ142080">
    <property type="protein sequence ID" value="ABA27649.1"/>
    <property type="molecule type" value="Genomic_DNA"/>
</dbReference>
<dbReference type="EMBL" id="DQ142081">
    <property type="protein sequence ID" value="ABA27650.1"/>
    <property type="molecule type" value="Genomic_DNA"/>
</dbReference>
<dbReference type="EMBL" id="DQ142082">
    <property type="protein sequence ID" value="ABA27651.1"/>
    <property type="molecule type" value="Genomic_DNA"/>
</dbReference>
<dbReference type="EMBL" id="DQ142083">
    <property type="protein sequence ID" value="ABA27652.1"/>
    <property type="molecule type" value="Genomic_DNA"/>
</dbReference>
<dbReference type="EMBL" id="DQ142084">
    <property type="protein sequence ID" value="ABA27653.1"/>
    <property type="molecule type" value="Genomic_DNA"/>
</dbReference>
<dbReference type="EMBL" id="DQ142085">
    <property type="protein sequence ID" value="ABA27654.1"/>
    <property type="molecule type" value="Genomic_DNA"/>
</dbReference>
<dbReference type="EMBL" id="DQ142086">
    <property type="protein sequence ID" value="ABA27655.1"/>
    <property type="molecule type" value="Genomic_DNA"/>
</dbReference>
<dbReference type="EMBL" id="DQ142087">
    <property type="protein sequence ID" value="ABA27656.1"/>
    <property type="molecule type" value="Genomic_DNA"/>
</dbReference>
<dbReference type="EMBL" id="DQ142088">
    <property type="protein sequence ID" value="ABA27657.1"/>
    <property type="molecule type" value="Genomic_DNA"/>
</dbReference>
<dbReference type="EMBL" id="DQ142089">
    <property type="protein sequence ID" value="ABA27658.1"/>
    <property type="molecule type" value="Genomic_DNA"/>
</dbReference>
<dbReference type="EMBL" id="DQ142090">
    <property type="protein sequence ID" value="ABA27659.1"/>
    <property type="molecule type" value="Genomic_DNA"/>
</dbReference>
<dbReference type="EMBL" id="DQ142091">
    <property type="protein sequence ID" value="ABA27660.1"/>
    <property type="molecule type" value="Genomic_DNA"/>
</dbReference>
<dbReference type="EMBL" id="DQ142092">
    <property type="protein sequence ID" value="ABA27661.1"/>
    <property type="molecule type" value="Genomic_DNA"/>
</dbReference>
<dbReference type="EMBL" id="DQ142093">
    <property type="protein sequence ID" value="ABA27662.1"/>
    <property type="molecule type" value="Genomic_DNA"/>
</dbReference>
<dbReference type="EMBL" id="DQ142100">
    <property type="protein sequence ID" value="ABA27663.1"/>
    <property type="molecule type" value="Genomic_DNA"/>
</dbReference>
<dbReference type="EMBL" id="DQ142101">
    <property type="protein sequence ID" value="ABA27664.1"/>
    <property type="molecule type" value="Genomic_DNA"/>
</dbReference>
<dbReference type="EMBL" id="DQ142102">
    <property type="protein sequence ID" value="ABA27665.1"/>
    <property type="molecule type" value="Genomic_DNA"/>
</dbReference>
<dbReference type="EMBL" id="DQ142103">
    <property type="protein sequence ID" value="ABA27666.1"/>
    <property type="molecule type" value="Genomic_DNA"/>
</dbReference>
<dbReference type="EMBL" id="DQ142104">
    <property type="protein sequence ID" value="ABA27667.1"/>
    <property type="molecule type" value="Genomic_DNA"/>
</dbReference>
<dbReference type="EMBL" id="DQ142105">
    <property type="protein sequence ID" value="ABA27668.1"/>
    <property type="molecule type" value="Genomic_DNA"/>
</dbReference>
<dbReference type="EMBL" id="DQ142106">
    <property type="protein sequence ID" value="ABA27669.1"/>
    <property type="molecule type" value="Genomic_DNA"/>
</dbReference>
<dbReference type="EMBL" id="DQ142107">
    <property type="protein sequence ID" value="ABA27670.1"/>
    <property type="molecule type" value="Genomic_DNA"/>
</dbReference>
<dbReference type="EMBL" id="DQ142108">
    <property type="protein sequence ID" value="ABA27671.1"/>
    <property type="molecule type" value="Genomic_DNA"/>
</dbReference>
<dbReference type="EMBL" id="DQ142109">
    <property type="protein sequence ID" value="ABA27672.1"/>
    <property type="molecule type" value="Genomic_DNA"/>
</dbReference>
<dbReference type="EMBL" id="DQ142110">
    <property type="protein sequence ID" value="ABA27673.1"/>
    <property type="molecule type" value="Genomic_DNA"/>
</dbReference>
<dbReference type="EMBL" id="DQ142111">
    <property type="protein sequence ID" value="ABA27674.1"/>
    <property type="molecule type" value="Genomic_DNA"/>
</dbReference>
<dbReference type="EMBL" id="DQ142112">
    <property type="protein sequence ID" value="ABA27675.1"/>
    <property type="molecule type" value="Genomic_DNA"/>
</dbReference>
<dbReference type="EMBL" id="DQ142113">
    <property type="protein sequence ID" value="ABA27676.1"/>
    <property type="molecule type" value="Genomic_DNA"/>
</dbReference>
<dbReference type="EMBL" id="DQ142114">
    <property type="protein sequence ID" value="ABA27677.1"/>
    <property type="molecule type" value="Genomic_DNA"/>
</dbReference>
<dbReference type="EMBL" id="DQ142115">
    <property type="protein sequence ID" value="ABA27678.1"/>
    <property type="molecule type" value="Genomic_DNA"/>
</dbReference>
<dbReference type="EMBL" id="DQ142116">
    <property type="protein sequence ID" value="ABA27679.1"/>
    <property type="molecule type" value="Genomic_DNA"/>
</dbReference>
<dbReference type="EMBL" id="DQ142117">
    <property type="protein sequence ID" value="ABA27680.1"/>
    <property type="molecule type" value="Genomic_DNA"/>
</dbReference>
<dbReference type="EMBL" id="DQ142118">
    <property type="protein sequence ID" value="ABA27681.1"/>
    <property type="molecule type" value="Genomic_DNA"/>
</dbReference>
<dbReference type="EMBL" id="DQ142119">
    <property type="protein sequence ID" value="ABA27682.1"/>
    <property type="molecule type" value="Genomic_DNA"/>
</dbReference>
<dbReference type="EMBL" id="DQ142120">
    <property type="protein sequence ID" value="ABA27683.1"/>
    <property type="molecule type" value="Genomic_DNA"/>
</dbReference>
<dbReference type="EMBL" id="DQ142121">
    <property type="protein sequence ID" value="ABA27684.1"/>
    <property type="molecule type" value="Genomic_DNA"/>
</dbReference>
<dbReference type="EMBL" id="DQ142122">
    <property type="protein sequence ID" value="ABA27685.1"/>
    <property type="molecule type" value="Genomic_DNA"/>
</dbReference>
<dbReference type="EMBL" id="DQ142123">
    <property type="protein sequence ID" value="ABA27686.1"/>
    <property type="molecule type" value="Genomic_DNA"/>
</dbReference>
<dbReference type="EMBL" id="DQ142124">
    <property type="protein sequence ID" value="ABA27687.1"/>
    <property type="molecule type" value="Genomic_DNA"/>
</dbReference>
<dbReference type="EMBL" id="DQ142125">
    <property type="protein sequence ID" value="ABA27688.1"/>
    <property type="molecule type" value="Genomic_DNA"/>
</dbReference>
<dbReference type="EMBL" id="DQ142126">
    <property type="protein sequence ID" value="ABA27689.1"/>
    <property type="molecule type" value="Genomic_DNA"/>
</dbReference>
<dbReference type="EMBL" id="DQ142127">
    <property type="protein sequence ID" value="ABA27690.1"/>
    <property type="molecule type" value="Genomic_DNA"/>
</dbReference>
<dbReference type="EMBL" id="DQ142128">
    <property type="protein sequence ID" value="ABA27691.1"/>
    <property type="molecule type" value="Genomic_DNA"/>
</dbReference>
<dbReference type="EMBL" id="DQ142129">
    <property type="protein sequence ID" value="ABA27692.1"/>
    <property type="molecule type" value="Genomic_DNA"/>
</dbReference>
<dbReference type="EMBL" id="DQ142130">
    <property type="protein sequence ID" value="ABA27693.1"/>
    <property type="molecule type" value="Genomic_DNA"/>
</dbReference>
<dbReference type="EMBL" id="DQ142131">
    <property type="protein sequence ID" value="ABA27694.1"/>
    <property type="molecule type" value="Genomic_DNA"/>
</dbReference>
<dbReference type="EMBL" id="DQ142132">
    <property type="protein sequence ID" value="ABA27695.1"/>
    <property type="molecule type" value="Genomic_DNA"/>
</dbReference>
<dbReference type="EMBL" id="DQ142133">
    <property type="protein sequence ID" value="ABA27696.1"/>
    <property type="molecule type" value="Genomic_DNA"/>
</dbReference>
<dbReference type="EMBL" id="DQ142134">
    <property type="protein sequence ID" value="ABA27697.1"/>
    <property type="molecule type" value="Genomic_DNA"/>
</dbReference>
<dbReference type="EMBL" id="DQ142135">
    <property type="protein sequence ID" value="ABA27698.1"/>
    <property type="molecule type" value="Genomic_DNA"/>
</dbReference>
<dbReference type="EMBL" id="DQ142136">
    <property type="protein sequence ID" value="ABA27699.1"/>
    <property type="molecule type" value="Genomic_DNA"/>
</dbReference>
<dbReference type="EMBL" id="DQ142137">
    <property type="protein sequence ID" value="ABA27700.1"/>
    <property type="molecule type" value="Genomic_DNA"/>
</dbReference>
<dbReference type="EMBL" id="DQ142138">
    <property type="protein sequence ID" value="ABA27701.1"/>
    <property type="molecule type" value="Genomic_DNA"/>
</dbReference>
<dbReference type="EMBL" id="DQ142139">
    <property type="protein sequence ID" value="ABA27702.1"/>
    <property type="molecule type" value="Genomic_DNA"/>
</dbReference>
<dbReference type="EMBL" id="DQ142140">
    <property type="protein sequence ID" value="ABA27703.1"/>
    <property type="molecule type" value="Genomic_DNA"/>
</dbReference>
<dbReference type="EMBL" id="DQ142141">
    <property type="protein sequence ID" value="ABA27704.1"/>
    <property type="molecule type" value="Genomic_DNA"/>
</dbReference>
<dbReference type="EMBL" id="DQ142142">
    <property type="protein sequence ID" value="ABA27705.1"/>
    <property type="molecule type" value="Genomic_DNA"/>
</dbReference>
<dbReference type="EMBL" id="DQ142143">
    <property type="protein sequence ID" value="ABA27706.1"/>
    <property type="molecule type" value="Genomic_DNA"/>
</dbReference>
<dbReference type="EMBL" id="DQ142144">
    <property type="protein sequence ID" value="ABA27707.1"/>
    <property type="molecule type" value="Genomic_DNA"/>
</dbReference>
<dbReference type="EMBL" id="DQ142145">
    <property type="protein sequence ID" value="ABA27708.1"/>
    <property type="molecule type" value="Genomic_DNA"/>
</dbReference>
<dbReference type="EMBL" id="DQ142146">
    <property type="protein sequence ID" value="ABA27709.1"/>
    <property type="molecule type" value="Genomic_DNA"/>
</dbReference>
<dbReference type="EMBL" id="DQ142147">
    <property type="protein sequence ID" value="ABA27710.1"/>
    <property type="molecule type" value="Genomic_DNA"/>
</dbReference>
<dbReference type="EMBL" id="DQ142148">
    <property type="protein sequence ID" value="ABA27711.1"/>
    <property type="molecule type" value="Genomic_DNA"/>
</dbReference>
<dbReference type="EMBL" id="DQ142149">
    <property type="protein sequence ID" value="ABA27712.1"/>
    <property type="molecule type" value="Genomic_DNA"/>
</dbReference>
<dbReference type="EMBL" id="DQ142150">
    <property type="protein sequence ID" value="ABA27713.1"/>
    <property type="molecule type" value="Genomic_DNA"/>
</dbReference>
<dbReference type="EMBL" id="DQ142151">
    <property type="protein sequence ID" value="ABA27714.1"/>
    <property type="molecule type" value="Genomic_DNA"/>
</dbReference>
<dbReference type="EMBL" id="DQ142152">
    <property type="protein sequence ID" value="ABA27715.1"/>
    <property type="molecule type" value="Genomic_DNA"/>
</dbReference>
<dbReference type="EMBL" id="DQ142153">
    <property type="protein sequence ID" value="ABA27716.1"/>
    <property type="molecule type" value="Genomic_DNA"/>
</dbReference>
<dbReference type="EMBL" id="DQ142154">
    <property type="protein sequence ID" value="ABA27717.1"/>
    <property type="molecule type" value="Genomic_DNA"/>
</dbReference>
<dbReference type="EMBL" id="DQ142155">
    <property type="protein sequence ID" value="ABA27718.1"/>
    <property type="molecule type" value="Genomic_DNA"/>
</dbReference>
<dbReference type="EMBL" id="DQ142156">
    <property type="protein sequence ID" value="ABA27719.1"/>
    <property type="molecule type" value="Genomic_DNA"/>
</dbReference>
<dbReference type="EMBL" id="DQ142157">
    <property type="protein sequence ID" value="ABA27720.1"/>
    <property type="molecule type" value="Genomic_DNA"/>
</dbReference>
<dbReference type="EMBL" id="DQ142158">
    <property type="protein sequence ID" value="ABA27721.1"/>
    <property type="molecule type" value="Genomic_DNA"/>
</dbReference>
<dbReference type="EMBL" id="DQ142159">
    <property type="protein sequence ID" value="ABA27722.1"/>
    <property type="molecule type" value="Genomic_DNA"/>
</dbReference>
<dbReference type="EMBL" id="DQ142160">
    <property type="protein sequence ID" value="ABA27723.1"/>
    <property type="molecule type" value="Genomic_DNA"/>
</dbReference>
<dbReference type="EMBL" id="DQ142161">
    <property type="protein sequence ID" value="ABA27724.1"/>
    <property type="molecule type" value="Genomic_DNA"/>
</dbReference>
<dbReference type="EMBL" id="DQ142162">
    <property type="protein sequence ID" value="ABA27725.1"/>
    <property type="molecule type" value="Genomic_DNA"/>
</dbReference>
<dbReference type="EMBL" id="DQ142163">
    <property type="protein sequence ID" value="ABA27726.1"/>
    <property type="molecule type" value="Genomic_DNA"/>
</dbReference>
<dbReference type="EMBL" id="DQ142164">
    <property type="protein sequence ID" value="ABA27727.1"/>
    <property type="molecule type" value="Genomic_DNA"/>
</dbReference>
<dbReference type="EMBL" id="DQ142165">
    <property type="protein sequence ID" value="ABA27728.1"/>
    <property type="molecule type" value="Genomic_DNA"/>
</dbReference>
<dbReference type="EMBL" id="DQ142166">
    <property type="protein sequence ID" value="ABA27729.1"/>
    <property type="molecule type" value="Genomic_DNA"/>
</dbReference>
<dbReference type="EMBL" id="DQ142167">
    <property type="protein sequence ID" value="ABA27730.1"/>
    <property type="molecule type" value="Genomic_DNA"/>
</dbReference>
<dbReference type="EMBL" id="DQ142168">
    <property type="protein sequence ID" value="ABA27731.1"/>
    <property type="molecule type" value="Genomic_DNA"/>
</dbReference>
<dbReference type="EMBL" id="DQ142169">
    <property type="protein sequence ID" value="ABA27732.1"/>
    <property type="molecule type" value="Genomic_DNA"/>
</dbReference>
<dbReference type="EMBL" id="DQ142170">
    <property type="protein sequence ID" value="ABA27733.1"/>
    <property type="molecule type" value="Genomic_DNA"/>
</dbReference>
<dbReference type="EMBL" id="DQ142171">
    <property type="protein sequence ID" value="ABA27734.1"/>
    <property type="molecule type" value="Genomic_DNA"/>
</dbReference>
<dbReference type="EMBL" id="DQ142178">
    <property type="protein sequence ID" value="ABA27735.1"/>
    <property type="molecule type" value="Genomic_DNA"/>
</dbReference>
<dbReference type="EMBL" id="DQ142179">
    <property type="protein sequence ID" value="ABA27736.1"/>
    <property type="molecule type" value="Genomic_DNA"/>
</dbReference>
<dbReference type="EMBL" id="DQ142180">
    <property type="protein sequence ID" value="ABA27737.1"/>
    <property type="molecule type" value="Genomic_DNA"/>
</dbReference>
<dbReference type="EMBL" id="DQ142181">
    <property type="protein sequence ID" value="ABA27738.1"/>
    <property type="molecule type" value="Genomic_DNA"/>
</dbReference>
<dbReference type="EMBL" id="DQ142182">
    <property type="protein sequence ID" value="ABA27739.1"/>
    <property type="molecule type" value="Genomic_DNA"/>
</dbReference>
<dbReference type="EMBL" id="DQ142183">
    <property type="protein sequence ID" value="ABA27740.1"/>
    <property type="molecule type" value="Genomic_DNA"/>
</dbReference>
<dbReference type="EMBL" id="DQ142184">
    <property type="protein sequence ID" value="ABA27741.1"/>
    <property type="molecule type" value="Genomic_DNA"/>
</dbReference>
<dbReference type="EMBL" id="DQ142185">
    <property type="protein sequence ID" value="ABA27742.1"/>
    <property type="molecule type" value="Genomic_DNA"/>
</dbReference>
<dbReference type="EMBL" id="DQ142186">
    <property type="protein sequence ID" value="ABA27743.1"/>
    <property type="molecule type" value="Genomic_DNA"/>
</dbReference>
<dbReference type="EMBL" id="DQ142187">
    <property type="protein sequence ID" value="ABA27744.1"/>
    <property type="molecule type" value="Genomic_DNA"/>
</dbReference>
<dbReference type="EMBL" id="DQ142188">
    <property type="protein sequence ID" value="ABA27745.1"/>
    <property type="molecule type" value="Genomic_DNA"/>
</dbReference>
<dbReference type="EMBL" id="DQ142189">
    <property type="protein sequence ID" value="ABA27746.1"/>
    <property type="molecule type" value="Genomic_DNA"/>
</dbReference>
<dbReference type="EMBL" id="DQ142190">
    <property type="protein sequence ID" value="ABA27747.1"/>
    <property type="molecule type" value="Genomic_DNA"/>
</dbReference>
<dbReference type="EMBL" id="DQ142191">
    <property type="protein sequence ID" value="ABA27748.1"/>
    <property type="molecule type" value="Genomic_DNA"/>
</dbReference>
<dbReference type="EMBL" id="DQ142192">
    <property type="protein sequence ID" value="ABA27749.1"/>
    <property type="molecule type" value="Genomic_DNA"/>
</dbReference>
<dbReference type="EMBL" id="DQ142193">
    <property type="protein sequence ID" value="ABA27750.1"/>
    <property type="molecule type" value="Genomic_DNA"/>
</dbReference>
<dbReference type="EMBL" id="DQ142194">
    <property type="protein sequence ID" value="ABA27751.1"/>
    <property type="molecule type" value="Genomic_DNA"/>
</dbReference>
<dbReference type="EMBL" id="DQ142195">
    <property type="protein sequence ID" value="ABA27752.1"/>
    <property type="molecule type" value="Genomic_DNA"/>
</dbReference>
<dbReference type="EMBL" id="DQ142196">
    <property type="protein sequence ID" value="ABA27753.1"/>
    <property type="molecule type" value="Genomic_DNA"/>
</dbReference>
<dbReference type="EMBL" id="DQ142197">
    <property type="protein sequence ID" value="ABA27754.1"/>
    <property type="molecule type" value="Genomic_DNA"/>
</dbReference>
<dbReference type="EMBL" id="DQ142198">
    <property type="protein sequence ID" value="ABA27755.1"/>
    <property type="molecule type" value="Genomic_DNA"/>
</dbReference>
<dbReference type="EMBL" id="DQ142199">
    <property type="protein sequence ID" value="ABA27756.1"/>
    <property type="molecule type" value="Genomic_DNA"/>
</dbReference>
<dbReference type="EMBL" id="DQ142200">
    <property type="protein sequence ID" value="ABA27757.1"/>
    <property type="molecule type" value="Genomic_DNA"/>
</dbReference>
<dbReference type="EMBL" id="DQ142201">
    <property type="protein sequence ID" value="ABA27758.1"/>
    <property type="molecule type" value="Genomic_DNA"/>
</dbReference>
<dbReference type="EMBL" id="DQ142202">
    <property type="protein sequence ID" value="ABA27759.1"/>
    <property type="molecule type" value="Genomic_DNA"/>
</dbReference>
<dbReference type="EMBL" id="DQ142203">
    <property type="protein sequence ID" value="ABA27760.1"/>
    <property type="molecule type" value="Genomic_DNA"/>
</dbReference>
<dbReference type="EMBL" id="DQ142204">
    <property type="protein sequence ID" value="ABA27761.1"/>
    <property type="molecule type" value="Genomic_DNA"/>
</dbReference>
<dbReference type="EMBL" id="DQ142205">
    <property type="protein sequence ID" value="ABA27762.1"/>
    <property type="molecule type" value="Genomic_DNA"/>
</dbReference>
<dbReference type="EMBL" id="DQ142206">
    <property type="protein sequence ID" value="ABA27763.1"/>
    <property type="molecule type" value="Genomic_DNA"/>
</dbReference>
<dbReference type="EMBL" id="DQ142207">
    <property type="protein sequence ID" value="ABA27764.1"/>
    <property type="molecule type" value="Genomic_DNA"/>
</dbReference>
<dbReference type="EMBL" id="DQ142208">
    <property type="protein sequence ID" value="ABA27765.1"/>
    <property type="molecule type" value="Genomic_DNA"/>
</dbReference>
<dbReference type="EMBL" id="DQ142209">
    <property type="protein sequence ID" value="ABA27766.1"/>
    <property type="molecule type" value="Genomic_DNA"/>
</dbReference>
<dbReference type="EMBL" id="DQ142210">
    <property type="protein sequence ID" value="ABA27767.1"/>
    <property type="molecule type" value="Genomic_DNA"/>
</dbReference>
<dbReference type="EMBL" id="DQ142211">
    <property type="protein sequence ID" value="ABA27768.1"/>
    <property type="molecule type" value="Genomic_DNA"/>
</dbReference>
<dbReference type="EMBL" id="DQ142212">
    <property type="protein sequence ID" value="ABA27769.1"/>
    <property type="molecule type" value="Genomic_DNA"/>
</dbReference>
<dbReference type="EMBL" id="DQ142213">
    <property type="protein sequence ID" value="ABA27770.1"/>
    <property type="molecule type" value="Genomic_DNA"/>
</dbReference>
<dbReference type="EMBL" id="DQ142214">
    <property type="protein sequence ID" value="ABA27771.1"/>
    <property type="molecule type" value="Genomic_DNA"/>
</dbReference>
<dbReference type="EMBL" id="DQ142215">
    <property type="protein sequence ID" value="ABA27772.1"/>
    <property type="molecule type" value="Genomic_DNA"/>
</dbReference>
<dbReference type="EMBL" id="DQ142216">
    <property type="protein sequence ID" value="ABA27773.1"/>
    <property type="molecule type" value="Genomic_DNA"/>
</dbReference>
<dbReference type="EMBL" id="DQ142217">
    <property type="protein sequence ID" value="ABA27774.1"/>
    <property type="molecule type" value="Genomic_DNA"/>
</dbReference>
<dbReference type="EMBL" id="DQ142218">
    <property type="protein sequence ID" value="ABA27775.1"/>
    <property type="molecule type" value="Genomic_DNA"/>
</dbReference>
<dbReference type="EMBL" id="DQ142219">
    <property type="protein sequence ID" value="ABA27776.1"/>
    <property type="molecule type" value="Genomic_DNA"/>
</dbReference>
<dbReference type="EMBL" id="DQ142220">
    <property type="protein sequence ID" value="ABA27777.1"/>
    <property type="molecule type" value="Genomic_DNA"/>
</dbReference>
<dbReference type="EMBL" id="DQ142221">
    <property type="protein sequence ID" value="ABA27778.1"/>
    <property type="molecule type" value="Genomic_DNA"/>
</dbReference>
<dbReference type="EMBL" id="DQ142222">
    <property type="protein sequence ID" value="ABA27779.1"/>
    <property type="molecule type" value="Genomic_DNA"/>
</dbReference>
<dbReference type="EMBL" id="DQ142223">
    <property type="protein sequence ID" value="ABA27780.1"/>
    <property type="molecule type" value="Genomic_DNA"/>
</dbReference>
<dbReference type="EMBL" id="DQ142224">
    <property type="protein sequence ID" value="ABA27781.1"/>
    <property type="molecule type" value="Genomic_DNA"/>
</dbReference>
<dbReference type="EMBL" id="DQ142225">
    <property type="protein sequence ID" value="ABA27782.1"/>
    <property type="molecule type" value="Genomic_DNA"/>
</dbReference>
<dbReference type="EMBL" id="DQ142226">
    <property type="protein sequence ID" value="ABA27783.1"/>
    <property type="molecule type" value="Genomic_DNA"/>
</dbReference>
<dbReference type="EMBL" id="DQ142227">
    <property type="protein sequence ID" value="ABA27784.1"/>
    <property type="molecule type" value="Genomic_DNA"/>
</dbReference>
<dbReference type="EMBL" id="DQ142228">
    <property type="protein sequence ID" value="ABA27785.1"/>
    <property type="molecule type" value="Genomic_DNA"/>
</dbReference>
<dbReference type="EMBL" id="DQ142229">
    <property type="protein sequence ID" value="ABA27786.1"/>
    <property type="molecule type" value="Genomic_DNA"/>
</dbReference>
<dbReference type="EMBL" id="DQ142230">
    <property type="protein sequence ID" value="ABA27787.1"/>
    <property type="molecule type" value="Genomic_DNA"/>
</dbReference>
<dbReference type="EMBL" id="DQ142231">
    <property type="protein sequence ID" value="ABA27788.1"/>
    <property type="molecule type" value="Genomic_DNA"/>
</dbReference>
<dbReference type="EMBL" id="DQ142232">
    <property type="protein sequence ID" value="ABA27789.1"/>
    <property type="molecule type" value="Genomic_DNA"/>
</dbReference>
<dbReference type="EMBL" id="DQ142233">
    <property type="protein sequence ID" value="ABA27790.1"/>
    <property type="molecule type" value="Genomic_DNA"/>
</dbReference>
<dbReference type="EMBL" id="DQ142234">
    <property type="protein sequence ID" value="ABA27791.1"/>
    <property type="molecule type" value="Genomic_DNA"/>
</dbReference>
<dbReference type="EMBL" id="DQ142235">
    <property type="protein sequence ID" value="ABA27792.1"/>
    <property type="molecule type" value="Genomic_DNA"/>
</dbReference>
<dbReference type="EMBL" id="DQ142236">
    <property type="protein sequence ID" value="ABA27793.1"/>
    <property type="molecule type" value="Genomic_DNA"/>
</dbReference>
<dbReference type="EMBL" id="DQ142237">
    <property type="protein sequence ID" value="ABA27794.1"/>
    <property type="molecule type" value="Genomic_DNA"/>
</dbReference>
<dbReference type="EMBL" id="DQ142238">
    <property type="protein sequence ID" value="ABA27795.1"/>
    <property type="molecule type" value="Genomic_DNA"/>
</dbReference>
<dbReference type="EMBL" id="DQ142239">
    <property type="protein sequence ID" value="ABA27796.1"/>
    <property type="molecule type" value="Genomic_DNA"/>
</dbReference>
<dbReference type="EMBL" id="DQ142240">
    <property type="protein sequence ID" value="ABA27797.1"/>
    <property type="molecule type" value="Genomic_DNA"/>
</dbReference>
<dbReference type="EMBL" id="DQ142241">
    <property type="protein sequence ID" value="ABA27798.1"/>
    <property type="molecule type" value="Genomic_DNA"/>
</dbReference>
<dbReference type="EMBL" id="DQ142242">
    <property type="protein sequence ID" value="ABA27799.1"/>
    <property type="molecule type" value="Genomic_DNA"/>
</dbReference>
<dbReference type="EMBL" id="DQ142243">
    <property type="protein sequence ID" value="ABA27800.1"/>
    <property type="molecule type" value="Genomic_DNA"/>
</dbReference>
<dbReference type="EMBL" id="DQ142244">
    <property type="protein sequence ID" value="ABA27801.1"/>
    <property type="molecule type" value="Genomic_DNA"/>
</dbReference>
<dbReference type="EMBL" id="DQ142245">
    <property type="protein sequence ID" value="ABA27802.1"/>
    <property type="molecule type" value="Genomic_DNA"/>
</dbReference>
<dbReference type="EMBL" id="DQ142246">
    <property type="protein sequence ID" value="ABA27803.1"/>
    <property type="molecule type" value="Genomic_DNA"/>
</dbReference>
<dbReference type="EMBL" id="DQ142247">
    <property type="protein sequence ID" value="ABA27804.1"/>
    <property type="molecule type" value="Genomic_DNA"/>
</dbReference>
<dbReference type="EMBL" id="DQ142248">
    <property type="protein sequence ID" value="ABA27805.1"/>
    <property type="molecule type" value="Genomic_DNA"/>
</dbReference>
<dbReference type="EMBL" id="DQ142249">
    <property type="protein sequence ID" value="ABA27806.1"/>
    <property type="molecule type" value="Genomic_DNA"/>
</dbReference>
<dbReference type="EMBL" id="DQ142256">
    <property type="protein sequence ID" value="ABA27807.1"/>
    <property type="molecule type" value="Genomic_DNA"/>
</dbReference>
<dbReference type="EMBL" id="DQ142257">
    <property type="protein sequence ID" value="ABA27808.1"/>
    <property type="molecule type" value="Genomic_DNA"/>
</dbReference>
<dbReference type="EMBL" id="DQ142258">
    <property type="protein sequence ID" value="ABA27809.1"/>
    <property type="molecule type" value="Genomic_DNA"/>
</dbReference>
<dbReference type="EMBL" id="DQ142259">
    <property type="protein sequence ID" value="ABA27810.1"/>
    <property type="molecule type" value="Genomic_DNA"/>
</dbReference>
<dbReference type="EMBL" id="DQ142260">
    <property type="protein sequence ID" value="ABA27811.1"/>
    <property type="molecule type" value="Genomic_DNA"/>
</dbReference>
<dbReference type="EMBL" id="DQ142261">
    <property type="protein sequence ID" value="ABA27812.1"/>
    <property type="molecule type" value="Genomic_DNA"/>
</dbReference>
<dbReference type="EMBL" id="DQ142262">
    <property type="protein sequence ID" value="ABA27813.1"/>
    <property type="molecule type" value="Genomic_DNA"/>
</dbReference>
<dbReference type="EMBL" id="DQ142263">
    <property type="protein sequence ID" value="ABA27814.1"/>
    <property type="molecule type" value="Genomic_DNA"/>
</dbReference>
<dbReference type="EMBL" id="DQ142264">
    <property type="protein sequence ID" value="ABA27815.1"/>
    <property type="molecule type" value="Genomic_DNA"/>
</dbReference>
<dbReference type="EMBL" id="DQ142265">
    <property type="protein sequence ID" value="ABA27816.1"/>
    <property type="molecule type" value="Genomic_DNA"/>
</dbReference>
<dbReference type="EMBL" id="DQ142266">
    <property type="protein sequence ID" value="ABA27817.1"/>
    <property type="molecule type" value="Genomic_DNA"/>
</dbReference>
<dbReference type="EMBL" id="DQ142267">
    <property type="protein sequence ID" value="ABA27818.1"/>
    <property type="molecule type" value="Genomic_DNA"/>
</dbReference>
<dbReference type="EMBL" id="DQ142268">
    <property type="protein sequence ID" value="ABA27819.1"/>
    <property type="molecule type" value="Genomic_DNA"/>
</dbReference>
<dbReference type="EMBL" id="DQ142269">
    <property type="protein sequence ID" value="ABA27820.1"/>
    <property type="molecule type" value="Genomic_DNA"/>
</dbReference>
<dbReference type="EMBL" id="DQ142270">
    <property type="protein sequence ID" value="ABA27821.1"/>
    <property type="molecule type" value="Genomic_DNA"/>
</dbReference>
<dbReference type="EMBL" id="DQ142271">
    <property type="protein sequence ID" value="ABA27822.1"/>
    <property type="molecule type" value="Genomic_DNA"/>
</dbReference>
<dbReference type="EMBL" id="DQ142272">
    <property type="protein sequence ID" value="ABA27823.1"/>
    <property type="molecule type" value="Genomic_DNA"/>
</dbReference>
<dbReference type="EMBL" id="DQ142273">
    <property type="protein sequence ID" value="ABA27824.1"/>
    <property type="molecule type" value="Genomic_DNA"/>
</dbReference>
<dbReference type="EMBL" id="DQ142274">
    <property type="protein sequence ID" value="ABA27825.1"/>
    <property type="molecule type" value="Genomic_DNA"/>
</dbReference>
<dbReference type="EMBL" id="DQ142275">
    <property type="protein sequence ID" value="ABA27826.1"/>
    <property type="molecule type" value="Genomic_DNA"/>
</dbReference>
<dbReference type="EMBL" id="DQ142276">
    <property type="protein sequence ID" value="ABA27827.1"/>
    <property type="molecule type" value="Genomic_DNA"/>
</dbReference>
<dbReference type="EMBL" id="DQ142277">
    <property type="protein sequence ID" value="ABA27828.1"/>
    <property type="molecule type" value="Genomic_DNA"/>
</dbReference>
<dbReference type="EMBL" id="DQ142278">
    <property type="protein sequence ID" value="ABA27829.1"/>
    <property type="molecule type" value="Genomic_DNA"/>
</dbReference>
<dbReference type="EMBL" id="DQ142279">
    <property type="protein sequence ID" value="ABA27830.1"/>
    <property type="molecule type" value="Genomic_DNA"/>
</dbReference>
<dbReference type="EMBL" id="DQ142280">
    <property type="protein sequence ID" value="ABA27831.1"/>
    <property type="molecule type" value="Genomic_DNA"/>
</dbReference>
<dbReference type="EMBL" id="DQ142281">
    <property type="protein sequence ID" value="ABA27832.1"/>
    <property type="molecule type" value="Genomic_DNA"/>
</dbReference>
<dbReference type="EMBL" id="DQ142282">
    <property type="protein sequence ID" value="ABA27833.1"/>
    <property type="molecule type" value="Genomic_DNA"/>
</dbReference>
<dbReference type="EMBL" id="DQ142283">
    <property type="protein sequence ID" value="ABA27834.1"/>
    <property type="molecule type" value="Genomic_DNA"/>
</dbReference>
<dbReference type="EMBL" id="DQ142284">
    <property type="protein sequence ID" value="ABA27835.1"/>
    <property type="molecule type" value="Genomic_DNA"/>
</dbReference>
<dbReference type="EMBL" id="DQ142285">
    <property type="protein sequence ID" value="ABA27836.1"/>
    <property type="molecule type" value="Genomic_DNA"/>
</dbReference>
<dbReference type="EMBL" id="DQ142286">
    <property type="protein sequence ID" value="ABA27837.1"/>
    <property type="molecule type" value="Genomic_DNA"/>
</dbReference>
<dbReference type="EMBL" id="DQ142287">
    <property type="protein sequence ID" value="ABA27838.1"/>
    <property type="molecule type" value="Genomic_DNA"/>
</dbReference>
<dbReference type="EMBL" id="DQ142288">
    <property type="protein sequence ID" value="ABA27839.1"/>
    <property type="molecule type" value="Genomic_DNA"/>
</dbReference>
<dbReference type="EMBL" id="DQ142289">
    <property type="protein sequence ID" value="ABA27840.1"/>
    <property type="molecule type" value="Genomic_DNA"/>
</dbReference>
<dbReference type="EMBL" id="DQ142290">
    <property type="protein sequence ID" value="ABA27841.1"/>
    <property type="molecule type" value="Genomic_DNA"/>
</dbReference>
<dbReference type="EMBL" id="DQ142291">
    <property type="protein sequence ID" value="ABA27842.1"/>
    <property type="molecule type" value="Genomic_DNA"/>
</dbReference>
<dbReference type="EMBL" id="DQ142292">
    <property type="protein sequence ID" value="ABA27843.1"/>
    <property type="molecule type" value="Genomic_DNA"/>
</dbReference>
<dbReference type="EMBL" id="DQ142293">
    <property type="protein sequence ID" value="ABA27844.1"/>
    <property type="molecule type" value="Genomic_DNA"/>
</dbReference>
<dbReference type="EMBL" id="DQ142294">
    <property type="protein sequence ID" value="ABA27845.1"/>
    <property type="molecule type" value="Genomic_DNA"/>
</dbReference>
<dbReference type="EMBL" id="DQ142295">
    <property type="protein sequence ID" value="ABA27846.1"/>
    <property type="molecule type" value="Genomic_DNA"/>
</dbReference>
<dbReference type="EMBL" id="DQ142296">
    <property type="protein sequence ID" value="ABA27847.1"/>
    <property type="molecule type" value="Genomic_DNA"/>
</dbReference>
<dbReference type="EMBL" id="DQ142297">
    <property type="protein sequence ID" value="ABA27848.1"/>
    <property type="molecule type" value="Genomic_DNA"/>
</dbReference>
<dbReference type="EMBL" id="DQ142298">
    <property type="protein sequence ID" value="ABA27849.1"/>
    <property type="molecule type" value="Genomic_DNA"/>
</dbReference>
<dbReference type="EMBL" id="DQ142299">
    <property type="protein sequence ID" value="ABA27850.1"/>
    <property type="molecule type" value="Genomic_DNA"/>
</dbReference>
<dbReference type="EMBL" id="DQ142300">
    <property type="protein sequence ID" value="ABA27851.1"/>
    <property type="molecule type" value="Genomic_DNA"/>
</dbReference>
<dbReference type="EMBL" id="DQ142301">
    <property type="protein sequence ID" value="ABA27852.1"/>
    <property type="molecule type" value="Genomic_DNA"/>
</dbReference>
<dbReference type="EMBL" id="DQ142302">
    <property type="protein sequence ID" value="ABA27853.1"/>
    <property type="molecule type" value="Genomic_DNA"/>
</dbReference>
<dbReference type="EMBL" id="DQ142303">
    <property type="protein sequence ID" value="ABA27854.1"/>
    <property type="molecule type" value="Genomic_DNA"/>
</dbReference>
<dbReference type="EMBL" id="DQ142304">
    <property type="protein sequence ID" value="ABA27855.1"/>
    <property type="molecule type" value="Genomic_DNA"/>
</dbReference>
<dbReference type="EMBL" id="DQ142305">
    <property type="protein sequence ID" value="ABA27856.1"/>
    <property type="molecule type" value="Genomic_DNA"/>
</dbReference>
<dbReference type="EMBL" id="DQ142306">
    <property type="protein sequence ID" value="ABA27857.1"/>
    <property type="molecule type" value="Genomic_DNA"/>
</dbReference>
<dbReference type="EMBL" id="DQ142307">
    <property type="protein sequence ID" value="ABA27858.1"/>
    <property type="molecule type" value="Genomic_DNA"/>
</dbReference>
<dbReference type="EMBL" id="DQ142308">
    <property type="protein sequence ID" value="ABA27859.1"/>
    <property type="molecule type" value="Genomic_DNA"/>
</dbReference>
<dbReference type="EMBL" id="DQ142309">
    <property type="protein sequence ID" value="ABA27860.1"/>
    <property type="molecule type" value="Genomic_DNA"/>
</dbReference>
<dbReference type="EMBL" id="DQ142310">
    <property type="protein sequence ID" value="ABA27861.1"/>
    <property type="molecule type" value="Genomic_DNA"/>
</dbReference>
<dbReference type="EMBL" id="DQ142311">
    <property type="protein sequence ID" value="ABA27862.1"/>
    <property type="molecule type" value="Genomic_DNA"/>
</dbReference>
<dbReference type="EMBL" id="DQ142312">
    <property type="protein sequence ID" value="ABA27863.1"/>
    <property type="molecule type" value="Genomic_DNA"/>
</dbReference>
<dbReference type="EMBL" id="DQ142313">
    <property type="protein sequence ID" value="ABA27864.1"/>
    <property type="molecule type" value="Genomic_DNA"/>
</dbReference>
<dbReference type="EMBL" id="DQ142314">
    <property type="protein sequence ID" value="ABA27865.1"/>
    <property type="molecule type" value="Genomic_DNA"/>
</dbReference>
<dbReference type="EMBL" id="DQ142315">
    <property type="protein sequence ID" value="ABA27866.1"/>
    <property type="molecule type" value="Genomic_DNA"/>
</dbReference>
<dbReference type="EMBL" id="DQ142316">
    <property type="protein sequence ID" value="ABA27867.1"/>
    <property type="molecule type" value="Genomic_DNA"/>
</dbReference>
<dbReference type="EMBL" id="DQ142317">
    <property type="protein sequence ID" value="ABA27868.1"/>
    <property type="molecule type" value="Genomic_DNA"/>
</dbReference>
<dbReference type="EMBL" id="DQ142318">
    <property type="protein sequence ID" value="ABA27869.1"/>
    <property type="molecule type" value="Genomic_DNA"/>
</dbReference>
<dbReference type="EMBL" id="DQ142319">
    <property type="protein sequence ID" value="ABA27870.1"/>
    <property type="molecule type" value="Genomic_DNA"/>
</dbReference>
<dbReference type="EMBL" id="DQ142320">
    <property type="protein sequence ID" value="ABA27871.1"/>
    <property type="molecule type" value="Genomic_DNA"/>
</dbReference>
<dbReference type="EMBL" id="DQ142321">
    <property type="protein sequence ID" value="ABA27872.1"/>
    <property type="molecule type" value="Genomic_DNA"/>
</dbReference>
<dbReference type="EMBL" id="DQ142322">
    <property type="protein sequence ID" value="ABA27873.1"/>
    <property type="molecule type" value="Genomic_DNA"/>
</dbReference>
<dbReference type="EMBL" id="DQ142323">
    <property type="protein sequence ID" value="ABA27874.1"/>
    <property type="molecule type" value="Genomic_DNA"/>
</dbReference>
<dbReference type="EMBL" id="DQ142324">
    <property type="protein sequence ID" value="ABA27875.1"/>
    <property type="molecule type" value="Genomic_DNA"/>
</dbReference>
<dbReference type="EMBL" id="DQ142325">
    <property type="protein sequence ID" value="ABA27876.1"/>
    <property type="molecule type" value="Genomic_DNA"/>
</dbReference>
<dbReference type="EMBL" id="DQ142326">
    <property type="protein sequence ID" value="ABA27877.1"/>
    <property type="molecule type" value="Genomic_DNA"/>
</dbReference>
<dbReference type="EMBL" id="DQ142327">
    <property type="protein sequence ID" value="ABA27878.1"/>
    <property type="molecule type" value="Genomic_DNA"/>
</dbReference>
<dbReference type="EMBL" id="DQ142334">
    <property type="protein sequence ID" value="ABA27879.1"/>
    <property type="molecule type" value="Genomic_DNA"/>
</dbReference>
<dbReference type="EMBL" id="DQ142335">
    <property type="protein sequence ID" value="ABA27880.1"/>
    <property type="molecule type" value="Genomic_DNA"/>
</dbReference>
<dbReference type="EMBL" id="DQ142336">
    <property type="protein sequence ID" value="ABA27881.1"/>
    <property type="molecule type" value="Genomic_DNA"/>
</dbReference>
<dbReference type="EMBL" id="DQ142337">
    <property type="protein sequence ID" value="ABA27882.1"/>
    <property type="molecule type" value="Genomic_DNA"/>
</dbReference>
<dbReference type="EMBL" id="DQ142338">
    <property type="protein sequence ID" value="ABA27883.1"/>
    <property type="molecule type" value="Genomic_DNA"/>
</dbReference>
<dbReference type="EMBL" id="DQ142339">
    <property type="protein sequence ID" value="ABA27884.1"/>
    <property type="molecule type" value="Genomic_DNA"/>
</dbReference>
<dbReference type="EMBL" id="DQ142340">
    <property type="protein sequence ID" value="ABA27885.1"/>
    <property type="molecule type" value="Genomic_DNA"/>
</dbReference>
<dbReference type="EMBL" id="DQ142341">
    <property type="protein sequence ID" value="ABA27886.1"/>
    <property type="molecule type" value="Genomic_DNA"/>
</dbReference>
<dbReference type="EMBL" id="DQ142342">
    <property type="protein sequence ID" value="ABA27887.1"/>
    <property type="molecule type" value="Genomic_DNA"/>
</dbReference>
<dbReference type="EMBL" id="DQ142343">
    <property type="protein sequence ID" value="ABA27888.1"/>
    <property type="molecule type" value="Genomic_DNA"/>
</dbReference>
<dbReference type="EMBL" id="DQ142344">
    <property type="protein sequence ID" value="ABA27889.1"/>
    <property type="molecule type" value="Genomic_DNA"/>
</dbReference>
<dbReference type="EMBL" id="DQ142345">
    <property type="protein sequence ID" value="ABA27890.1"/>
    <property type="molecule type" value="Genomic_DNA"/>
</dbReference>
<dbReference type="EMBL" id="DQ142346">
    <property type="protein sequence ID" value="ABA27891.1"/>
    <property type="molecule type" value="Genomic_DNA"/>
</dbReference>
<dbReference type="EMBL" id="DQ142347">
    <property type="protein sequence ID" value="ABA27892.1"/>
    <property type="molecule type" value="Genomic_DNA"/>
</dbReference>
<dbReference type="EMBL" id="DQ142348">
    <property type="protein sequence ID" value="ABA27893.1"/>
    <property type="molecule type" value="Genomic_DNA"/>
</dbReference>
<dbReference type="EMBL" id="DQ142349">
    <property type="protein sequence ID" value="ABA27894.1"/>
    <property type="molecule type" value="Genomic_DNA"/>
</dbReference>
<dbReference type="EMBL" id="DQ142350">
    <property type="protein sequence ID" value="ABA27895.1"/>
    <property type="molecule type" value="Genomic_DNA"/>
</dbReference>
<dbReference type="EMBL" id="DQ142351">
    <property type="protein sequence ID" value="ABA27896.1"/>
    <property type="molecule type" value="Genomic_DNA"/>
</dbReference>
<dbReference type="EMBL" id="DQ142352">
    <property type="protein sequence ID" value="ABA27897.1"/>
    <property type="molecule type" value="Genomic_DNA"/>
</dbReference>
<dbReference type="EMBL" id="DQ142353">
    <property type="protein sequence ID" value="ABA27898.1"/>
    <property type="molecule type" value="Genomic_DNA"/>
</dbReference>
<dbReference type="EMBL" id="DQ142354">
    <property type="protein sequence ID" value="ABA27899.1"/>
    <property type="molecule type" value="Genomic_DNA"/>
</dbReference>
<dbReference type="EMBL" id="DQ142355">
    <property type="protein sequence ID" value="ABA27900.1"/>
    <property type="molecule type" value="Genomic_DNA"/>
</dbReference>
<dbReference type="EMBL" id="DQ142356">
    <property type="protein sequence ID" value="ABA27901.1"/>
    <property type="molecule type" value="Genomic_DNA"/>
</dbReference>
<dbReference type="EMBL" id="DQ142357">
    <property type="protein sequence ID" value="ABA27902.1"/>
    <property type="molecule type" value="Genomic_DNA"/>
</dbReference>
<dbReference type="EMBL" id="DQ142358">
    <property type="protein sequence ID" value="ABA27903.1"/>
    <property type="molecule type" value="Genomic_DNA"/>
</dbReference>
<dbReference type="EMBL" id="DQ142359">
    <property type="protein sequence ID" value="ABA27904.1"/>
    <property type="molecule type" value="Genomic_DNA"/>
</dbReference>
<dbReference type="EMBL" id="DQ142360">
    <property type="protein sequence ID" value="ABA27905.1"/>
    <property type="molecule type" value="Genomic_DNA"/>
</dbReference>
<dbReference type="EMBL" id="DQ142361">
    <property type="protein sequence ID" value="ABA27906.1"/>
    <property type="molecule type" value="Genomic_DNA"/>
</dbReference>
<dbReference type="EMBL" id="DQ142362">
    <property type="protein sequence ID" value="ABA27907.1"/>
    <property type="molecule type" value="Genomic_DNA"/>
</dbReference>
<dbReference type="EMBL" id="DQ142363">
    <property type="protein sequence ID" value="ABA27908.1"/>
    <property type="molecule type" value="Genomic_DNA"/>
</dbReference>
<dbReference type="EMBL" id="DQ142364">
    <property type="protein sequence ID" value="ABA27909.1"/>
    <property type="molecule type" value="Genomic_DNA"/>
</dbReference>
<dbReference type="EMBL" id="DQ142365">
    <property type="protein sequence ID" value="ABA27910.1"/>
    <property type="molecule type" value="Genomic_DNA"/>
</dbReference>
<dbReference type="EMBL" id="DQ142366">
    <property type="protein sequence ID" value="ABA27911.1"/>
    <property type="molecule type" value="Genomic_DNA"/>
</dbReference>
<dbReference type="EMBL" id="DQ142367">
    <property type="protein sequence ID" value="ABA27912.1"/>
    <property type="molecule type" value="Genomic_DNA"/>
</dbReference>
<dbReference type="EMBL" id="DQ142368">
    <property type="protein sequence ID" value="ABA27913.1"/>
    <property type="molecule type" value="Genomic_DNA"/>
</dbReference>
<dbReference type="EMBL" id="DQ142369">
    <property type="protein sequence ID" value="ABA27914.1"/>
    <property type="molecule type" value="Genomic_DNA"/>
</dbReference>
<dbReference type="EMBL" id="DQ142370">
    <property type="protein sequence ID" value="ABA27915.1"/>
    <property type="molecule type" value="Genomic_DNA"/>
</dbReference>
<dbReference type="EMBL" id="DQ142371">
    <property type="protein sequence ID" value="ABA27916.1"/>
    <property type="molecule type" value="Genomic_DNA"/>
</dbReference>
<dbReference type="EMBL" id="DQ142372">
    <property type="protein sequence ID" value="ABA27917.1"/>
    <property type="molecule type" value="Genomic_DNA"/>
</dbReference>
<dbReference type="EMBL" id="DQ142373">
    <property type="protein sequence ID" value="ABA27918.1"/>
    <property type="molecule type" value="Genomic_DNA"/>
</dbReference>
<dbReference type="EMBL" id="DQ142374">
    <property type="protein sequence ID" value="ABA27919.1"/>
    <property type="molecule type" value="Genomic_DNA"/>
</dbReference>
<dbReference type="EMBL" id="DQ142375">
    <property type="protein sequence ID" value="ABA27920.1"/>
    <property type="molecule type" value="Genomic_DNA"/>
</dbReference>
<dbReference type="EMBL" id="DQ142376">
    <property type="protein sequence ID" value="ABA27921.1"/>
    <property type="molecule type" value="Genomic_DNA"/>
</dbReference>
<dbReference type="EMBL" id="DQ142377">
    <property type="protein sequence ID" value="ABA27922.1"/>
    <property type="molecule type" value="Genomic_DNA"/>
</dbReference>
<dbReference type="EMBL" id="DQ142378">
    <property type="protein sequence ID" value="ABA27923.1"/>
    <property type="molecule type" value="Genomic_DNA"/>
</dbReference>
<dbReference type="EMBL" id="DQ142379">
    <property type="protein sequence ID" value="ABA27924.1"/>
    <property type="molecule type" value="Genomic_DNA"/>
</dbReference>
<dbReference type="EMBL" id="DQ142380">
    <property type="protein sequence ID" value="ABA27925.1"/>
    <property type="molecule type" value="Genomic_DNA"/>
</dbReference>
<dbReference type="EMBL" id="DQ142381">
    <property type="protein sequence ID" value="ABA27926.1"/>
    <property type="molecule type" value="Genomic_DNA"/>
</dbReference>
<dbReference type="EMBL" id="DQ142382">
    <property type="protein sequence ID" value="ABA27927.1"/>
    <property type="molecule type" value="Genomic_DNA"/>
</dbReference>
<dbReference type="EMBL" id="DQ142383">
    <property type="protein sequence ID" value="ABA27928.1"/>
    <property type="molecule type" value="Genomic_DNA"/>
</dbReference>
<dbReference type="EMBL" id="DQ142384">
    <property type="protein sequence ID" value="ABA27929.1"/>
    <property type="molecule type" value="Genomic_DNA"/>
</dbReference>
<dbReference type="EMBL" id="DQ142385">
    <property type="protein sequence ID" value="ABA27930.1"/>
    <property type="molecule type" value="Genomic_DNA"/>
</dbReference>
<dbReference type="EMBL" id="DQ142386">
    <property type="protein sequence ID" value="ABA27931.1"/>
    <property type="molecule type" value="Genomic_DNA"/>
</dbReference>
<dbReference type="EMBL" id="DQ142387">
    <property type="protein sequence ID" value="ABA27932.1"/>
    <property type="molecule type" value="Genomic_DNA"/>
</dbReference>
<dbReference type="EMBL" id="DQ142388">
    <property type="protein sequence ID" value="ABA27933.1"/>
    <property type="molecule type" value="Genomic_DNA"/>
</dbReference>
<dbReference type="EMBL" id="DQ142389">
    <property type="protein sequence ID" value="ABA27934.1"/>
    <property type="molecule type" value="Genomic_DNA"/>
</dbReference>
<dbReference type="EMBL" id="DQ142390">
    <property type="protein sequence ID" value="ABA27935.1"/>
    <property type="molecule type" value="Genomic_DNA"/>
</dbReference>
<dbReference type="EMBL" id="DQ142391">
    <property type="protein sequence ID" value="ABA27936.1"/>
    <property type="molecule type" value="Genomic_DNA"/>
</dbReference>
<dbReference type="EMBL" id="DQ142392">
    <property type="protein sequence ID" value="ABA27937.1"/>
    <property type="molecule type" value="Genomic_DNA"/>
</dbReference>
<dbReference type="EMBL" id="DQ142393">
    <property type="protein sequence ID" value="ABA27938.1"/>
    <property type="molecule type" value="Genomic_DNA"/>
</dbReference>
<dbReference type="EMBL" id="DQ142394">
    <property type="protein sequence ID" value="ABA27939.1"/>
    <property type="molecule type" value="Genomic_DNA"/>
</dbReference>
<dbReference type="EMBL" id="DQ142395">
    <property type="protein sequence ID" value="ABA27940.1"/>
    <property type="molecule type" value="Genomic_DNA"/>
</dbReference>
<dbReference type="EMBL" id="DQ142396">
    <property type="protein sequence ID" value="ABA27941.1"/>
    <property type="molecule type" value="Genomic_DNA"/>
</dbReference>
<dbReference type="EMBL" id="DQ142397">
    <property type="protein sequence ID" value="ABA27942.1"/>
    <property type="molecule type" value="Genomic_DNA"/>
</dbReference>
<dbReference type="EMBL" id="DQ142398">
    <property type="protein sequence ID" value="ABA27943.1"/>
    <property type="molecule type" value="Genomic_DNA"/>
</dbReference>
<dbReference type="EMBL" id="DQ142399">
    <property type="protein sequence ID" value="ABA27944.1"/>
    <property type="molecule type" value="Genomic_DNA"/>
</dbReference>
<dbReference type="EMBL" id="DQ142400">
    <property type="protein sequence ID" value="ABA27945.1"/>
    <property type="molecule type" value="Genomic_DNA"/>
</dbReference>
<dbReference type="EMBL" id="DQ142401">
    <property type="protein sequence ID" value="ABA27946.1"/>
    <property type="molecule type" value="Genomic_DNA"/>
</dbReference>
<dbReference type="EMBL" id="DQ142402">
    <property type="protein sequence ID" value="ABA27947.1"/>
    <property type="molecule type" value="Genomic_DNA"/>
</dbReference>
<dbReference type="EMBL" id="DQ142403">
    <property type="protein sequence ID" value="ABA27948.1"/>
    <property type="molecule type" value="Genomic_DNA"/>
</dbReference>
<dbReference type="EMBL" id="DQ142404">
    <property type="protein sequence ID" value="ABA27949.1"/>
    <property type="molecule type" value="Genomic_DNA"/>
</dbReference>
<dbReference type="EMBL" id="DQ142405">
    <property type="protein sequence ID" value="ABA27950.1"/>
    <property type="molecule type" value="Genomic_DNA"/>
</dbReference>
<dbReference type="EMBL" id="DQ142412">
    <property type="protein sequence ID" value="ABA28095.1"/>
    <property type="molecule type" value="Genomic_DNA"/>
</dbReference>
<dbReference type="EMBL" id="DQ142413">
    <property type="protein sequence ID" value="ABA28096.1"/>
    <property type="molecule type" value="Genomic_DNA"/>
</dbReference>
<dbReference type="EMBL" id="DQ142414">
    <property type="protein sequence ID" value="ABA28097.1"/>
    <property type="molecule type" value="Genomic_DNA"/>
</dbReference>
<dbReference type="EMBL" id="DQ142415">
    <property type="protein sequence ID" value="ABA28098.1"/>
    <property type="molecule type" value="Genomic_DNA"/>
</dbReference>
<dbReference type="EMBL" id="DQ142416">
    <property type="protein sequence ID" value="ABA28099.1"/>
    <property type="molecule type" value="Genomic_DNA"/>
</dbReference>
<dbReference type="EMBL" id="DQ142417">
    <property type="protein sequence ID" value="ABA28100.1"/>
    <property type="molecule type" value="Genomic_DNA"/>
</dbReference>
<dbReference type="EMBL" id="DQ142418">
    <property type="protein sequence ID" value="ABA28101.1"/>
    <property type="molecule type" value="Genomic_DNA"/>
</dbReference>
<dbReference type="EMBL" id="DQ142419">
    <property type="protein sequence ID" value="ABA28102.1"/>
    <property type="molecule type" value="Genomic_DNA"/>
</dbReference>
<dbReference type="EMBL" id="DQ142420">
    <property type="protein sequence ID" value="ABA28103.1"/>
    <property type="molecule type" value="Genomic_DNA"/>
</dbReference>
<dbReference type="EMBL" id="DQ142421">
    <property type="protein sequence ID" value="ABA28104.1"/>
    <property type="molecule type" value="Genomic_DNA"/>
</dbReference>
<dbReference type="EMBL" id="DQ142422">
    <property type="protein sequence ID" value="ABA28105.1"/>
    <property type="molecule type" value="Genomic_DNA"/>
</dbReference>
<dbReference type="EMBL" id="DQ142423">
    <property type="protein sequence ID" value="ABA28106.1"/>
    <property type="molecule type" value="Genomic_DNA"/>
</dbReference>
<dbReference type="EMBL" id="DQ142424">
    <property type="protein sequence ID" value="ABA28107.1"/>
    <property type="molecule type" value="Genomic_DNA"/>
</dbReference>
<dbReference type="EMBL" id="DQ142425">
    <property type="protein sequence ID" value="ABA28108.1"/>
    <property type="molecule type" value="Genomic_DNA"/>
</dbReference>
<dbReference type="EMBL" id="DQ142426">
    <property type="protein sequence ID" value="ABA28109.1"/>
    <property type="molecule type" value="Genomic_DNA"/>
</dbReference>
<dbReference type="EMBL" id="DQ142427">
    <property type="protein sequence ID" value="ABA28110.1"/>
    <property type="molecule type" value="Genomic_DNA"/>
</dbReference>
<dbReference type="EMBL" id="DQ142428">
    <property type="protein sequence ID" value="ABA28111.1"/>
    <property type="molecule type" value="Genomic_DNA"/>
</dbReference>
<dbReference type="EMBL" id="DQ142429">
    <property type="protein sequence ID" value="ABA28112.1"/>
    <property type="molecule type" value="Genomic_DNA"/>
</dbReference>
<dbReference type="EMBL" id="DQ142430">
    <property type="protein sequence ID" value="ABA28113.1"/>
    <property type="molecule type" value="Genomic_DNA"/>
</dbReference>
<dbReference type="EMBL" id="DQ142431">
    <property type="protein sequence ID" value="ABA28114.1"/>
    <property type="molecule type" value="Genomic_DNA"/>
</dbReference>
<dbReference type="EMBL" id="DQ142432">
    <property type="protein sequence ID" value="ABA28115.1"/>
    <property type="molecule type" value="Genomic_DNA"/>
</dbReference>
<dbReference type="EMBL" id="DQ142433">
    <property type="protein sequence ID" value="ABA28116.1"/>
    <property type="molecule type" value="Genomic_DNA"/>
</dbReference>
<dbReference type="EMBL" id="DQ142434">
    <property type="protein sequence ID" value="ABA28117.1"/>
    <property type="molecule type" value="Genomic_DNA"/>
</dbReference>
<dbReference type="EMBL" id="DQ142435">
    <property type="protein sequence ID" value="ABA28118.1"/>
    <property type="molecule type" value="Genomic_DNA"/>
</dbReference>
<dbReference type="EMBL" id="DQ142436">
    <property type="protein sequence ID" value="ABA28119.1"/>
    <property type="molecule type" value="Genomic_DNA"/>
</dbReference>
<dbReference type="EMBL" id="DQ142437">
    <property type="protein sequence ID" value="ABA28120.1"/>
    <property type="molecule type" value="Genomic_DNA"/>
</dbReference>
<dbReference type="EMBL" id="DQ142438">
    <property type="protein sequence ID" value="ABA28121.1"/>
    <property type="molecule type" value="Genomic_DNA"/>
</dbReference>
<dbReference type="EMBL" id="DQ142439">
    <property type="protein sequence ID" value="ABA28122.1"/>
    <property type="molecule type" value="Genomic_DNA"/>
</dbReference>
<dbReference type="EMBL" id="DQ142440">
    <property type="protein sequence ID" value="ABA28123.1"/>
    <property type="molecule type" value="Genomic_DNA"/>
</dbReference>
<dbReference type="EMBL" id="DQ142441">
    <property type="protein sequence ID" value="ABA28124.1"/>
    <property type="molecule type" value="Genomic_DNA"/>
</dbReference>
<dbReference type="EMBL" id="DQ142442">
    <property type="protein sequence ID" value="ABA28125.1"/>
    <property type="molecule type" value="Genomic_DNA"/>
</dbReference>
<dbReference type="EMBL" id="DQ142443">
    <property type="protein sequence ID" value="ABA28126.1"/>
    <property type="molecule type" value="Genomic_DNA"/>
</dbReference>
<dbReference type="EMBL" id="DQ142444">
    <property type="protein sequence ID" value="ABA28127.1"/>
    <property type="molecule type" value="Genomic_DNA"/>
</dbReference>
<dbReference type="EMBL" id="DQ142445">
    <property type="protein sequence ID" value="ABA28128.1"/>
    <property type="molecule type" value="Genomic_DNA"/>
</dbReference>
<dbReference type="EMBL" id="DQ142446">
    <property type="protein sequence ID" value="ABA28129.1"/>
    <property type="molecule type" value="Genomic_DNA"/>
</dbReference>
<dbReference type="EMBL" id="DQ142447">
    <property type="protein sequence ID" value="ABA28130.1"/>
    <property type="molecule type" value="Genomic_DNA"/>
</dbReference>
<dbReference type="EMBL" id="DQ142448">
    <property type="protein sequence ID" value="ABA28131.1"/>
    <property type="molecule type" value="Genomic_DNA"/>
</dbReference>
<dbReference type="EMBL" id="DQ142449">
    <property type="protein sequence ID" value="ABA28132.1"/>
    <property type="molecule type" value="Genomic_DNA"/>
</dbReference>
<dbReference type="EMBL" id="DQ142450">
    <property type="protein sequence ID" value="ABA28133.1"/>
    <property type="molecule type" value="Genomic_DNA"/>
</dbReference>
<dbReference type="EMBL" id="DQ142451">
    <property type="protein sequence ID" value="ABA28134.1"/>
    <property type="molecule type" value="Genomic_DNA"/>
</dbReference>
<dbReference type="EMBL" id="DQ142452">
    <property type="protein sequence ID" value="ABA28135.1"/>
    <property type="molecule type" value="Genomic_DNA"/>
</dbReference>
<dbReference type="EMBL" id="DQ142453">
    <property type="protein sequence ID" value="ABA28136.1"/>
    <property type="molecule type" value="Genomic_DNA"/>
</dbReference>
<dbReference type="EMBL" id="DQ142454">
    <property type="protein sequence ID" value="ABA28137.1"/>
    <property type="molecule type" value="Genomic_DNA"/>
</dbReference>
<dbReference type="EMBL" id="DQ142455">
    <property type="protein sequence ID" value="ABA28138.1"/>
    <property type="molecule type" value="Genomic_DNA"/>
</dbReference>
<dbReference type="EMBL" id="DQ142456">
    <property type="protein sequence ID" value="ABA28139.1"/>
    <property type="molecule type" value="Genomic_DNA"/>
</dbReference>
<dbReference type="EMBL" id="DQ142457">
    <property type="protein sequence ID" value="ABA28140.1"/>
    <property type="molecule type" value="Genomic_DNA"/>
</dbReference>
<dbReference type="EMBL" id="DQ142458">
    <property type="protein sequence ID" value="ABA28141.1"/>
    <property type="molecule type" value="Genomic_DNA"/>
</dbReference>
<dbReference type="EMBL" id="DQ142459">
    <property type="protein sequence ID" value="ABA28142.1"/>
    <property type="molecule type" value="Genomic_DNA"/>
</dbReference>
<dbReference type="EMBL" id="DQ142460">
    <property type="protein sequence ID" value="ABA28143.1"/>
    <property type="molecule type" value="Genomic_DNA"/>
</dbReference>
<dbReference type="EMBL" id="DQ142461">
    <property type="protein sequence ID" value="ABA28144.1"/>
    <property type="molecule type" value="Genomic_DNA"/>
</dbReference>
<dbReference type="EMBL" id="DQ142462">
    <property type="protein sequence ID" value="ABA28145.1"/>
    <property type="molecule type" value="Genomic_DNA"/>
</dbReference>
<dbReference type="EMBL" id="DQ142463">
    <property type="protein sequence ID" value="ABA28146.1"/>
    <property type="molecule type" value="Genomic_DNA"/>
</dbReference>
<dbReference type="EMBL" id="DQ142464">
    <property type="protein sequence ID" value="ABA28147.1"/>
    <property type="molecule type" value="Genomic_DNA"/>
</dbReference>
<dbReference type="EMBL" id="DQ142465">
    <property type="protein sequence ID" value="ABA28148.1"/>
    <property type="molecule type" value="Genomic_DNA"/>
</dbReference>
<dbReference type="EMBL" id="DQ142466">
    <property type="protein sequence ID" value="ABA28149.1"/>
    <property type="molecule type" value="Genomic_DNA"/>
</dbReference>
<dbReference type="EMBL" id="DQ142467">
    <property type="protein sequence ID" value="ABA28150.1"/>
    <property type="molecule type" value="Genomic_DNA"/>
</dbReference>
<dbReference type="EMBL" id="DQ142468">
    <property type="protein sequence ID" value="ABA28151.1"/>
    <property type="molecule type" value="Genomic_DNA"/>
</dbReference>
<dbReference type="EMBL" id="DQ142469">
    <property type="protein sequence ID" value="ABA28152.1"/>
    <property type="molecule type" value="Genomic_DNA"/>
</dbReference>
<dbReference type="EMBL" id="DQ142470">
    <property type="protein sequence ID" value="ABA28153.1"/>
    <property type="molecule type" value="Genomic_DNA"/>
</dbReference>
<dbReference type="EMBL" id="DQ142471">
    <property type="protein sequence ID" value="ABA28154.1"/>
    <property type="molecule type" value="Genomic_DNA"/>
</dbReference>
<dbReference type="EMBL" id="DQ142472">
    <property type="protein sequence ID" value="ABA28155.1"/>
    <property type="molecule type" value="Genomic_DNA"/>
</dbReference>
<dbReference type="EMBL" id="DQ142473">
    <property type="protein sequence ID" value="ABA28156.1"/>
    <property type="molecule type" value="Genomic_DNA"/>
</dbReference>
<dbReference type="EMBL" id="DQ142474">
    <property type="protein sequence ID" value="ABA28157.1"/>
    <property type="molecule type" value="Genomic_DNA"/>
</dbReference>
<dbReference type="EMBL" id="DQ142475">
    <property type="protein sequence ID" value="ABA28158.1"/>
    <property type="molecule type" value="Genomic_DNA"/>
</dbReference>
<dbReference type="EMBL" id="DQ142476">
    <property type="protein sequence ID" value="ABA28159.1"/>
    <property type="molecule type" value="Genomic_DNA"/>
</dbReference>
<dbReference type="EMBL" id="DQ142477">
    <property type="protein sequence ID" value="ABA28160.1"/>
    <property type="molecule type" value="Genomic_DNA"/>
</dbReference>
<dbReference type="EMBL" id="DQ142478">
    <property type="protein sequence ID" value="ABA28161.1"/>
    <property type="molecule type" value="Genomic_DNA"/>
</dbReference>
<dbReference type="EMBL" id="DQ142479">
    <property type="protein sequence ID" value="ABA28162.1"/>
    <property type="molecule type" value="Genomic_DNA"/>
</dbReference>
<dbReference type="EMBL" id="DQ142480">
    <property type="protein sequence ID" value="ABA28163.1"/>
    <property type="molecule type" value="Genomic_DNA"/>
</dbReference>
<dbReference type="EMBL" id="DQ142481">
    <property type="protein sequence ID" value="ABA28164.1"/>
    <property type="molecule type" value="Genomic_DNA"/>
</dbReference>
<dbReference type="EMBL" id="DQ142482">
    <property type="protein sequence ID" value="ABA28165.1"/>
    <property type="molecule type" value="Genomic_DNA"/>
</dbReference>
<dbReference type="EMBL" id="DQ142483">
    <property type="protein sequence ID" value="ABA28166.1"/>
    <property type="molecule type" value="Genomic_DNA"/>
</dbReference>
<dbReference type="EMBL" id="DQ142490">
    <property type="protein sequence ID" value="ABA27951.1"/>
    <property type="molecule type" value="Genomic_DNA"/>
</dbReference>
<dbReference type="EMBL" id="DQ142491">
    <property type="protein sequence ID" value="ABA27952.1"/>
    <property type="molecule type" value="Genomic_DNA"/>
</dbReference>
<dbReference type="EMBL" id="DQ142492">
    <property type="protein sequence ID" value="ABA27953.1"/>
    <property type="molecule type" value="Genomic_DNA"/>
</dbReference>
<dbReference type="EMBL" id="DQ142493">
    <property type="protein sequence ID" value="ABA27954.1"/>
    <property type="molecule type" value="Genomic_DNA"/>
</dbReference>
<dbReference type="EMBL" id="DQ142494">
    <property type="protein sequence ID" value="ABA27955.1"/>
    <property type="molecule type" value="Genomic_DNA"/>
</dbReference>
<dbReference type="EMBL" id="DQ142495">
    <property type="protein sequence ID" value="ABA27956.1"/>
    <property type="molecule type" value="Genomic_DNA"/>
</dbReference>
<dbReference type="EMBL" id="DQ142496">
    <property type="protein sequence ID" value="ABA27957.1"/>
    <property type="molecule type" value="Genomic_DNA"/>
</dbReference>
<dbReference type="EMBL" id="DQ142497">
    <property type="protein sequence ID" value="ABA27958.1"/>
    <property type="molecule type" value="Genomic_DNA"/>
</dbReference>
<dbReference type="EMBL" id="DQ142498">
    <property type="protein sequence ID" value="ABA27959.1"/>
    <property type="molecule type" value="Genomic_DNA"/>
</dbReference>
<dbReference type="EMBL" id="DQ142499">
    <property type="protein sequence ID" value="ABA27960.1"/>
    <property type="molecule type" value="Genomic_DNA"/>
</dbReference>
<dbReference type="EMBL" id="DQ142500">
    <property type="protein sequence ID" value="ABA27961.1"/>
    <property type="molecule type" value="Genomic_DNA"/>
</dbReference>
<dbReference type="EMBL" id="DQ142501">
    <property type="protein sequence ID" value="ABA27962.1"/>
    <property type="molecule type" value="Genomic_DNA"/>
</dbReference>
<dbReference type="EMBL" id="DQ142502">
    <property type="protein sequence ID" value="ABA27963.1"/>
    <property type="molecule type" value="Genomic_DNA"/>
</dbReference>
<dbReference type="EMBL" id="DQ142503">
    <property type="protein sequence ID" value="ABA27964.1"/>
    <property type="molecule type" value="Genomic_DNA"/>
</dbReference>
<dbReference type="EMBL" id="DQ142504">
    <property type="protein sequence ID" value="ABA27965.1"/>
    <property type="molecule type" value="Genomic_DNA"/>
</dbReference>
<dbReference type="EMBL" id="DQ142505">
    <property type="protein sequence ID" value="ABA27966.1"/>
    <property type="molecule type" value="Genomic_DNA"/>
</dbReference>
<dbReference type="EMBL" id="DQ142506">
    <property type="protein sequence ID" value="ABA27967.1"/>
    <property type="molecule type" value="Genomic_DNA"/>
</dbReference>
<dbReference type="EMBL" id="DQ142507">
    <property type="protein sequence ID" value="ABA27968.1"/>
    <property type="molecule type" value="Genomic_DNA"/>
</dbReference>
<dbReference type="EMBL" id="DQ142508">
    <property type="protein sequence ID" value="ABA27969.1"/>
    <property type="molecule type" value="Genomic_DNA"/>
</dbReference>
<dbReference type="EMBL" id="DQ142509">
    <property type="protein sequence ID" value="ABA27970.1"/>
    <property type="molecule type" value="Genomic_DNA"/>
</dbReference>
<dbReference type="EMBL" id="DQ142510">
    <property type="protein sequence ID" value="ABA27971.1"/>
    <property type="molecule type" value="Genomic_DNA"/>
</dbReference>
<dbReference type="EMBL" id="DQ142511">
    <property type="protein sequence ID" value="ABA27972.1"/>
    <property type="molecule type" value="Genomic_DNA"/>
</dbReference>
<dbReference type="EMBL" id="DQ142512">
    <property type="protein sequence ID" value="ABA27973.1"/>
    <property type="molecule type" value="Genomic_DNA"/>
</dbReference>
<dbReference type="EMBL" id="DQ142513">
    <property type="protein sequence ID" value="ABA27974.1"/>
    <property type="molecule type" value="Genomic_DNA"/>
</dbReference>
<dbReference type="EMBL" id="DQ142514">
    <property type="protein sequence ID" value="ABA27975.1"/>
    <property type="molecule type" value="Genomic_DNA"/>
</dbReference>
<dbReference type="EMBL" id="DQ142515">
    <property type="protein sequence ID" value="ABA27976.1"/>
    <property type="molecule type" value="Genomic_DNA"/>
</dbReference>
<dbReference type="EMBL" id="DQ142516">
    <property type="protein sequence ID" value="ABA27977.1"/>
    <property type="molecule type" value="Genomic_DNA"/>
</dbReference>
<dbReference type="EMBL" id="DQ142517">
    <property type="protein sequence ID" value="ABA27978.1"/>
    <property type="molecule type" value="Genomic_DNA"/>
</dbReference>
<dbReference type="EMBL" id="DQ142518">
    <property type="protein sequence ID" value="ABA27979.1"/>
    <property type="molecule type" value="Genomic_DNA"/>
</dbReference>
<dbReference type="EMBL" id="DQ142519">
    <property type="protein sequence ID" value="ABA27980.1"/>
    <property type="molecule type" value="Genomic_DNA"/>
</dbReference>
<dbReference type="EMBL" id="DQ142520">
    <property type="protein sequence ID" value="ABA27981.1"/>
    <property type="molecule type" value="Genomic_DNA"/>
</dbReference>
<dbReference type="EMBL" id="DQ142521">
    <property type="protein sequence ID" value="ABA27982.1"/>
    <property type="molecule type" value="Genomic_DNA"/>
</dbReference>
<dbReference type="EMBL" id="DQ142522">
    <property type="protein sequence ID" value="ABA27983.1"/>
    <property type="molecule type" value="Genomic_DNA"/>
</dbReference>
<dbReference type="EMBL" id="DQ142523">
    <property type="protein sequence ID" value="ABA27984.1"/>
    <property type="molecule type" value="Genomic_DNA"/>
</dbReference>
<dbReference type="EMBL" id="DQ142524">
    <property type="protein sequence ID" value="ABA27985.1"/>
    <property type="molecule type" value="Genomic_DNA"/>
</dbReference>
<dbReference type="EMBL" id="DQ142525">
    <property type="protein sequence ID" value="ABA27986.1"/>
    <property type="molecule type" value="Genomic_DNA"/>
</dbReference>
<dbReference type="EMBL" id="DQ142526">
    <property type="protein sequence ID" value="ABA27987.1"/>
    <property type="molecule type" value="Genomic_DNA"/>
</dbReference>
<dbReference type="EMBL" id="DQ142527">
    <property type="protein sequence ID" value="ABA27988.1"/>
    <property type="molecule type" value="Genomic_DNA"/>
</dbReference>
<dbReference type="EMBL" id="DQ142528">
    <property type="protein sequence ID" value="ABA27989.1"/>
    <property type="molecule type" value="Genomic_DNA"/>
</dbReference>
<dbReference type="EMBL" id="DQ142529">
    <property type="protein sequence ID" value="ABA27990.1"/>
    <property type="molecule type" value="Genomic_DNA"/>
</dbReference>
<dbReference type="EMBL" id="DQ142530">
    <property type="protein sequence ID" value="ABA27991.1"/>
    <property type="molecule type" value="Genomic_DNA"/>
</dbReference>
<dbReference type="EMBL" id="DQ142531">
    <property type="protein sequence ID" value="ABA27992.1"/>
    <property type="molecule type" value="Genomic_DNA"/>
</dbReference>
<dbReference type="EMBL" id="DQ142532">
    <property type="protein sequence ID" value="ABA27993.1"/>
    <property type="molecule type" value="Genomic_DNA"/>
</dbReference>
<dbReference type="EMBL" id="DQ142533">
    <property type="protein sequence ID" value="ABA27994.1"/>
    <property type="molecule type" value="Genomic_DNA"/>
</dbReference>
<dbReference type="EMBL" id="DQ142534">
    <property type="protein sequence ID" value="ABA27995.1"/>
    <property type="molecule type" value="Genomic_DNA"/>
</dbReference>
<dbReference type="EMBL" id="DQ142535">
    <property type="protein sequence ID" value="ABA27996.1"/>
    <property type="molecule type" value="Genomic_DNA"/>
</dbReference>
<dbReference type="EMBL" id="DQ142536">
    <property type="protein sequence ID" value="ABA27997.1"/>
    <property type="molecule type" value="Genomic_DNA"/>
</dbReference>
<dbReference type="EMBL" id="DQ142537">
    <property type="protein sequence ID" value="ABA27998.1"/>
    <property type="molecule type" value="Genomic_DNA"/>
</dbReference>
<dbReference type="EMBL" id="DQ142538">
    <property type="protein sequence ID" value="ABA27999.1"/>
    <property type="molecule type" value="Genomic_DNA"/>
</dbReference>
<dbReference type="EMBL" id="DQ142539">
    <property type="protein sequence ID" value="ABA28000.1"/>
    <property type="molecule type" value="Genomic_DNA"/>
</dbReference>
<dbReference type="EMBL" id="DQ142540">
    <property type="protein sequence ID" value="ABA28001.1"/>
    <property type="molecule type" value="Genomic_DNA"/>
</dbReference>
<dbReference type="EMBL" id="DQ142541">
    <property type="protein sequence ID" value="ABA28002.1"/>
    <property type="molecule type" value="Genomic_DNA"/>
</dbReference>
<dbReference type="EMBL" id="DQ142542">
    <property type="protein sequence ID" value="ABA28003.1"/>
    <property type="molecule type" value="Genomic_DNA"/>
</dbReference>
<dbReference type="EMBL" id="DQ142543">
    <property type="protein sequence ID" value="ABA28004.1"/>
    <property type="molecule type" value="Genomic_DNA"/>
</dbReference>
<dbReference type="EMBL" id="DQ142544">
    <property type="protein sequence ID" value="ABA28005.1"/>
    <property type="molecule type" value="Genomic_DNA"/>
</dbReference>
<dbReference type="EMBL" id="DQ142545">
    <property type="protein sequence ID" value="ABA28006.1"/>
    <property type="molecule type" value="Genomic_DNA"/>
</dbReference>
<dbReference type="EMBL" id="DQ142546">
    <property type="protein sequence ID" value="ABA28007.1"/>
    <property type="molecule type" value="Genomic_DNA"/>
</dbReference>
<dbReference type="EMBL" id="DQ142547">
    <property type="protein sequence ID" value="ABA28008.1"/>
    <property type="molecule type" value="Genomic_DNA"/>
</dbReference>
<dbReference type="EMBL" id="DQ142548">
    <property type="protein sequence ID" value="ABA28009.1"/>
    <property type="molecule type" value="Genomic_DNA"/>
</dbReference>
<dbReference type="EMBL" id="DQ142549">
    <property type="protein sequence ID" value="ABA28010.1"/>
    <property type="molecule type" value="Genomic_DNA"/>
</dbReference>
<dbReference type="EMBL" id="DQ142550">
    <property type="protein sequence ID" value="ABA28011.1"/>
    <property type="molecule type" value="Genomic_DNA"/>
</dbReference>
<dbReference type="EMBL" id="DQ142551">
    <property type="protein sequence ID" value="ABA28012.1"/>
    <property type="molecule type" value="Genomic_DNA"/>
</dbReference>
<dbReference type="EMBL" id="DQ142552">
    <property type="protein sequence ID" value="ABA28013.1"/>
    <property type="molecule type" value="Genomic_DNA"/>
</dbReference>
<dbReference type="EMBL" id="DQ142553">
    <property type="protein sequence ID" value="ABA28014.1"/>
    <property type="molecule type" value="Genomic_DNA"/>
</dbReference>
<dbReference type="EMBL" id="DQ142554">
    <property type="protein sequence ID" value="ABA28015.1"/>
    <property type="molecule type" value="Genomic_DNA"/>
</dbReference>
<dbReference type="EMBL" id="DQ142555">
    <property type="protein sequence ID" value="ABA28016.1"/>
    <property type="molecule type" value="Genomic_DNA"/>
</dbReference>
<dbReference type="EMBL" id="DQ142556">
    <property type="protein sequence ID" value="ABA28017.1"/>
    <property type="molecule type" value="Genomic_DNA"/>
</dbReference>
<dbReference type="EMBL" id="DQ142557">
    <property type="protein sequence ID" value="ABA28018.1"/>
    <property type="molecule type" value="Genomic_DNA"/>
</dbReference>
<dbReference type="EMBL" id="DQ142558">
    <property type="protein sequence ID" value="ABA28019.1"/>
    <property type="molecule type" value="Genomic_DNA"/>
</dbReference>
<dbReference type="EMBL" id="DQ142559">
    <property type="protein sequence ID" value="ABA28020.1"/>
    <property type="molecule type" value="Genomic_DNA"/>
</dbReference>
<dbReference type="EMBL" id="DQ142560">
    <property type="protein sequence ID" value="ABA28021.1"/>
    <property type="molecule type" value="Genomic_DNA"/>
</dbReference>
<dbReference type="EMBL" id="DQ142561">
    <property type="protein sequence ID" value="ABA28022.1"/>
    <property type="molecule type" value="Genomic_DNA"/>
</dbReference>
<dbReference type="EMBL" id="DQ142568">
    <property type="protein sequence ID" value="ABA28023.1"/>
    <property type="molecule type" value="Genomic_DNA"/>
</dbReference>
<dbReference type="EMBL" id="DQ142569">
    <property type="protein sequence ID" value="ABA28024.1"/>
    <property type="molecule type" value="Genomic_DNA"/>
</dbReference>
<dbReference type="EMBL" id="DQ142570">
    <property type="protein sequence ID" value="ABA28025.1"/>
    <property type="molecule type" value="Genomic_DNA"/>
</dbReference>
<dbReference type="EMBL" id="DQ142571">
    <property type="protein sequence ID" value="ABA28026.1"/>
    <property type="molecule type" value="Genomic_DNA"/>
</dbReference>
<dbReference type="EMBL" id="DQ142572">
    <property type="protein sequence ID" value="ABA28027.1"/>
    <property type="molecule type" value="Genomic_DNA"/>
</dbReference>
<dbReference type="EMBL" id="DQ142573">
    <property type="protein sequence ID" value="ABA28028.1"/>
    <property type="molecule type" value="Genomic_DNA"/>
</dbReference>
<dbReference type="EMBL" id="DQ142574">
    <property type="protein sequence ID" value="ABA28029.1"/>
    <property type="molecule type" value="Genomic_DNA"/>
</dbReference>
<dbReference type="EMBL" id="DQ142575">
    <property type="protein sequence ID" value="ABA28030.1"/>
    <property type="molecule type" value="Genomic_DNA"/>
</dbReference>
<dbReference type="EMBL" id="DQ142576">
    <property type="protein sequence ID" value="ABA28031.1"/>
    <property type="molecule type" value="Genomic_DNA"/>
</dbReference>
<dbReference type="EMBL" id="DQ142577">
    <property type="protein sequence ID" value="ABA28032.1"/>
    <property type="molecule type" value="Genomic_DNA"/>
</dbReference>
<dbReference type="EMBL" id="DQ142578">
    <property type="protein sequence ID" value="ABA28033.1"/>
    <property type="molecule type" value="Genomic_DNA"/>
</dbReference>
<dbReference type="EMBL" id="DQ142579">
    <property type="protein sequence ID" value="ABA28034.1"/>
    <property type="molecule type" value="Genomic_DNA"/>
</dbReference>
<dbReference type="EMBL" id="DQ142580">
    <property type="protein sequence ID" value="ABA28035.1"/>
    <property type="molecule type" value="Genomic_DNA"/>
</dbReference>
<dbReference type="EMBL" id="DQ142581">
    <property type="protein sequence ID" value="ABA28036.1"/>
    <property type="molecule type" value="Genomic_DNA"/>
</dbReference>
<dbReference type="EMBL" id="DQ142582">
    <property type="protein sequence ID" value="ABA28037.1"/>
    <property type="molecule type" value="Genomic_DNA"/>
</dbReference>
<dbReference type="EMBL" id="DQ142583">
    <property type="protein sequence ID" value="ABA28038.1"/>
    <property type="molecule type" value="Genomic_DNA"/>
</dbReference>
<dbReference type="EMBL" id="DQ142584">
    <property type="protein sequence ID" value="ABA28039.1"/>
    <property type="molecule type" value="Genomic_DNA"/>
</dbReference>
<dbReference type="EMBL" id="DQ142585">
    <property type="protein sequence ID" value="ABA28040.1"/>
    <property type="molecule type" value="Genomic_DNA"/>
</dbReference>
<dbReference type="EMBL" id="DQ142586">
    <property type="protein sequence ID" value="ABA28041.1"/>
    <property type="molecule type" value="Genomic_DNA"/>
</dbReference>
<dbReference type="EMBL" id="DQ142587">
    <property type="protein sequence ID" value="ABA28042.1"/>
    <property type="molecule type" value="Genomic_DNA"/>
</dbReference>
<dbReference type="EMBL" id="DQ142588">
    <property type="protein sequence ID" value="ABA28043.1"/>
    <property type="molecule type" value="Genomic_DNA"/>
</dbReference>
<dbReference type="EMBL" id="DQ142589">
    <property type="protein sequence ID" value="ABA28044.1"/>
    <property type="molecule type" value="Genomic_DNA"/>
</dbReference>
<dbReference type="EMBL" id="DQ142590">
    <property type="protein sequence ID" value="ABA28045.1"/>
    <property type="molecule type" value="Genomic_DNA"/>
</dbReference>
<dbReference type="EMBL" id="DQ142591">
    <property type="protein sequence ID" value="ABA28046.1"/>
    <property type="molecule type" value="Genomic_DNA"/>
</dbReference>
<dbReference type="EMBL" id="DQ142592">
    <property type="protein sequence ID" value="ABA28047.1"/>
    <property type="molecule type" value="Genomic_DNA"/>
</dbReference>
<dbReference type="EMBL" id="DQ142593">
    <property type="protein sequence ID" value="ABA28048.1"/>
    <property type="molecule type" value="Genomic_DNA"/>
</dbReference>
<dbReference type="EMBL" id="DQ142594">
    <property type="protein sequence ID" value="ABA28049.1"/>
    <property type="molecule type" value="Genomic_DNA"/>
</dbReference>
<dbReference type="EMBL" id="DQ142595">
    <property type="protein sequence ID" value="ABA28050.1"/>
    <property type="molecule type" value="Genomic_DNA"/>
</dbReference>
<dbReference type="EMBL" id="DQ142596">
    <property type="protein sequence ID" value="ABA28051.1"/>
    <property type="molecule type" value="Genomic_DNA"/>
</dbReference>
<dbReference type="EMBL" id="DQ142597">
    <property type="protein sequence ID" value="ABA28052.1"/>
    <property type="molecule type" value="Genomic_DNA"/>
</dbReference>
<dbReference type="EMBL" id="DQ142598">
    <property type="protein sequence ID" value="ABA28053.1"/>
    <property type="molecule type" value="Genomic_DNA"/>
</dbReference>
<dbReference type="EMBL" id="DQ142599">
    <property type="protein sequence ID" value="ABA28054.1"/>
    <property type="molecule type" value="Genomic_DNA"/>
</dbReference>
<dbReference type="EMBL" id="DQ142600">
    <property type="protein sequence ID" value="ABA28055.1"/>
    <property type="molecule type" value="Genomic_DNA"/>
</dbReference>
<dbReference type="EMBL" id="DQ142601">
    <property type="protein sequence ID" value="ABA28056.1"/>
    <property type="molecule type" value="Genomic_DNA"/>
</dbReference>
<dbReference type="EMBL" id="DQ142602">
    <property type="protein sequence ID" value="ABA28057.1"/>
    <property type="molecule type" value="Genomic_DNA"/>
</dbReference>
<dbReference type="EMBL" id="DQ142603">
    <property type="protein sequence ID" value="ABA28058.1"/>
    <property type="molecule type" value="Genomic_DNA"/>
</dbReference>
<dbReference type="EMBL" id="DQ142604">
    <property type="protein sequence ID" value="ABA28059.1"/>
    <property type="molecule type" value="Genomic_DNA"/>
</dbReference>
<dbReference type="EMBL" id="DQ142605">
    <property type="protein sequence ID" value="ABA28060.1"/>
    <property type="molecule type" value="Genomic_DNA"/>
</dbReference>
<dbReference type="EMBL" id="DQ142606">
    <property type="protein sequence ID" value="ABA28061.1"/>
    <property type="molecule type" value="Genomic_DNA"/>
</dbReference>
<dbReference type="EMBL" id="DQ142607">
    <property type="protein sequence ID" value="ABA28062.1"/>
    <property type="molecule type" value="Genomic_DNA"/>
</dbReference>
<dbReference type="EMBL" id="DQ142608">
    <property type="protein sequence ID" value="ABA28063.1"/>
    <property type="molecule type" value="Genomic_DNA"/>
</dbReference>
<dbReference type="EMBL" id="DQ142609">
    <property type="protein sequence ID" value="ABA28064.1"/>
    <property type="molecule type" value="Genomic_DNA"/>
</dbReference>
<dbReference type="EMBL" id="DQ142610">
    <property type="protein sequence ID" value="ABA28065.1"/>
    <property type="molecule type" value="Genomic_DNA"/>
</dbReference>
<dbReference type="EMBL" id="DQ142611">
    <property type="protein sequence ID" value="ABA28066.1"/>
    <property type="molecule type" value="Genomic_DNA"/>
</dbReference>
<dbReference type="EMBL" id="DQ142612">
    <property type="protein sequence ID" value="ABA28067.1"/>
    <property type="molecule type" value="Genomic_DNA"/>
</dbReference>
<dbReference type="EMBL" id="DQ142613">
    <property type="protein sequence ID" value="ABA28068.1"/>
    <property type="molecule type" value="Genomic_DNA"/>
</dbReference>
<dbReference type="EMBL" id="DQ142614">
    <property type="protein sequence ID" value="ABA28069.1"/>
    <property type="molecule type" value="Genomic_DNA"/>
</dbReference>
<dbReference type="EMBL" id="DQ142615">
    <property type="protein sequence ID" value="ABA28070.1"/>
    <property type="molecule type" value="Genomic_DNA"/>
</dbReference>
<dbReference type="EMBL" id="DQ142616">
    <property type="protein sequence ID" value="ABA28071.1"/>
    <property type="molecule type" value="Genomic_DNA"/>
</dbReference>
<dbReference type="EMBL" id="DQ142617">
    <property type="protein sequence ID" value="ABA28072.1"/>
    <property type="molecule type" value="Genomic_DNA"/>
</dbReference>
<dbReference type="EMBL" id="DQ142618">
    <property type="protein sequence ID" value="ABA28073.1"/>
    <property type="molecule type" value="Genomic_DNA"/>
</dbReference>
<dbReference type="EMBL" id="DQ142619">
    <property type="protein sequence ID" value="ABA28074.1"/>
    <property type="molecule type" value="Genomic_DNA"/>
</dbReference>
<dbReference type="EMBL" id="DQ142620">
    <property type="protein sequence ID" value="ABA28075.1"/>
    <property type="molecule type" value="Genomic_DNA"/>
</dbReference>
<dbReference type="EMBL" id="DQ142621">
    <property type="protein sequence ID" value="ABA28076.1"/>
    <property type="molecule type" value="Genomic_DNA"/>
</dbReference>
<dbReference type="EMBL" id="DQ142622">
    <property type="protein sequence ID" value="ABA28077.1"/>
    <property type="molecule type" value="Genomic_DNA"/>
</dbReference>
<dbReference type="EMBL" id="DQ142623">
    <property type="protein sequence ID" value="ABA28078.1"/>
    <property type="molecule type" value="Genomic_DNA"/>
</dbReference>
<dbReference type="EMBL" id="DQ142624">
    <property type="protein sequence ID" value="ABA28079.1"/>
    <property type="molecule type" value="Genomic_DNA"/>
</dbReference>
<dbReference type="EMBL" id="DQ142625">
    <property type="protein sequence ID" value="ABA28080.1"/>
    <property type="molecule type" value="Genomic_DNA"/>
</dbReference>
<dbReference type="EMBL" id="DQ142626">
    <property type="protein sequence ID" value="ABA28081.1"/>
    <property type="molecule type" value="Genomic_DNA"/>
</dbReference>
<dbReference type="EMBL" id="DQ142627">
    <property type="protein sequence ID" value="ABA28082.1"/>
    <property type="molecule type" value="Genomic_DNA"/>
</dbReference>
<dbReference type="EMBL" id="DQ142628">
    <property type="protein sequence ID" value="ABA28083.1"/>
    <property type="molecule type" value="Genomic_DNA"/>
</dbReference>
<dbReference type="EMBL" id="DQ142629">
    <property type="protein sequence ID" value="ABA28084.1"/>
    <property type="molecule type" value="Genomic_DNA"/>
</dbReference>
<dbReference type="EMBL" id="DQ142630">
    <property type="protein sequence ID" value="ABA28085.1"/>
    <property type="molecule type" value="Genomic_DNA"/>
</dbReference>
<dbReference type="EMBL" id="DQ142631">
    <property type="protein sequence ID" value="ABA28086.1"/>
    <property type="molecule type" value="Genomic_DNA"/>
</dbReference>
<dbReference type="EMBL" id="DQ142632">
    <property type="protein sequence ID" value="ABA28087.1"/>
    <property type="molecule type" value="Genomic_DNA"/>
</dbReference>
<dbReference type="EMBL" id="DQ142633">
    <property type="protein sequence ID" value="ABA28088.1"/>
    <property type="molecule type" value="Genomic_DNA"/>
</dbReference>
<dbReference type="EMBL" id="DQ142634">
    <property type="protein sequence ID" value="ABA28089.1"/>
    <property type="molecule type" value="Genomic_DNA"/>
</dbReference>
<dbReference type="EMBL" id="DQ142635">
    <property type="protein sequence ID" value="ABA28090.1"/>
    <property type="molecule type" value="Genomic_DNA"/>
</dbReference>
<dbReference type="EMBL" id="DQ142636">
    <property type="protein sequence ID" value="ABA28091.1"/>
    <property type="molecule type" value="Genomic_DNA"/>
</dbReference>
<dbReference type="EMBL" id="DQ142637">
    <property type="protein sequence ID" value="ABA28092.1"/>
    <property type="molecule type" value="Genomic_DNA"/>
</dbReference>
<dbReference type="EMBL" id="DQ142638">
    <property type="protein sequence ID" value="ABA28093.1"/>
    <property type="molecule type" value="Genomic_DNA"/>
</dbReference>
<dbReference type="EMBL" id="DQ142639">
    <property type="protein sequence ID" value="ABA28094.1"/>
    <property type="molecule type" value="Genomic_DNA"/>
</dbReference>
<dbReference type="EMBL" id="AC063933">
    <property type="status" value="NOT_ANNOTATED_CDS"/>
    <property type="molecule type" value="Genomic_DNA"/>
</dbReference>
<dbReference type="EMBL" id="AC092948">
    <property type="status" value="NOT_ANNOTATED_CDS"/>
    <property type="molecule type" value="Genomic_DNA"/>
</dbReference>
<dbReference type="EMBL" id="BC034496">
    <property type="protein sequence ID" value="AAH34496.1"/>
    <property type="molecule type" value="mRNA"/>
</dbReference>
<dbReference type="CCDS" id="CCDS3221.1"/>
<dbReference type="RefSeq" id="NP_114161.3">
    <property type="nucleotide sequence ID" value="NM_031955.5"/>
</dbReference>
<dbReference type="SMR" id="Q9BXB7"/>
<dbReference type="BioGRID" id="123804">
    <property type="interactions" value="1"/>
</dbReference>
<dbReference type="FunCoup" id="Q9BXB7">
    <property type="interactions" value="65"/>
</dbReference>
<dbReference type="IntAct" id="Q9BXB7">
    <property type="interactions" value="2"/>
</dbReference>
<dbReference type="MINT" id="Q9BXB7"/>
<dbReference type="STRING" id="9606.ENSP00000341765"/>
<dbReference type="iPTMnet" id="Q9BXB7"/>
<dbReference type="PhosphoSitePlus" id="Q9BXB7"/>
<dbReference type="BioMuta" id="SPATA16"/>
<dbReference type="DMDM" id="296453014"/>
<dbReference type="MassIVE" id="Q9BXB7"/>
<dbReference type="PaxDb" id="9606-ENSP00000341765"/>
<dbReference type="PeptideAtlas" id="Q9BXB7"/>
<dbReference type="ProteomicsDB" id="79401"/>
<dbReference type="Antibodypedia" id="46805">
    <property type="antibodies" value="80 antibodies from 19 providers"/>
</dbReference>
<dbReference type="DNASU" id="83893"/>
<dbReference type="Ensembl" id="ENST00000351008.4">
    <property type="protein sequence ID" value="ENSP00000341765.3"/>
    <property type="gene ID" value="ENSG00000144962.7"/>
</dbReference>
<dbReference type="GeneID" id="83893"/>
<dbReference type="KEGG" id="hsa:83893"/>
<dbReference type="MANE-Select" id="ENST00000351008.4">
    <property type="protein sequence ID" value="ENSP00000341765.3"/>
    <property type="RefSeq nucleotide sequence ID" value="NM_031955.6"/>
    <property type="RefSeq protein sequence ID" value="NP_114161.3"/>
</dbReference>
<dbReference type="UCSC" id="uc003fin.5">
    <property type="organism name" value="human"/>
</dbReference>
<dbReference type="AGR" id="HGNC:29935"/>
<dbReference type="CTD" id="83893"/>
<dbReference type="DisGeNET" id="83893"/>
<dbReference type="GeneCards" id="SPATA16"/>
<dbReference type="HGNC" id="HGNC:29935">
    <property type="gene designation" value="SPATA16"/>
</dbReference>
<dbReference type="HPA" id="ENSG00000144962">
    <property type="expression patterns" value="Tissue enriched (testis)"/>
</dbReference>
<dbReference type="MalaCards" id="SPATA16"/>
<dbReference type="MIM" id="102530">
    <property type="type" value="phenotype"/>
</dbReference>
<dbReference type="MIM" id="609856">
    <property type="type" value="gene"/>
</dbReference>
<dbReference type="neXtProt" id="NX_Q9BXB7"/>
<dbReference type="OpenTargets" id="ENSG00000144962"/>
<dbReference type="Orphanet" id="171709">
    <property type="disease" value="Male infertility due to globozoospermia"/>
</dbReference>
<dbReference type="PharmGKB" id="PA134942358"/>
<dbReference type="VEuPathDB" id="HostDB:ENSG00000144962"/>
<dbReference type="eggNOG" id="ENOG502RSQ1">
    <property type="taxonomic scope" value="Eukaryota"/>
</dbReference>
<dbReference type="GeneTree" id="ENSGT00390000015332"/>
<dbReference type="HOGENOM" id="CLU_034262_0_0_1"/>
<dbReference type="InParanoid" id="Q9BXB7"/>
<dbReference type="OMA" id="LIRLYWQ"/>
<dbReference type="OrthoDB" id="9930656at2759"/>
<dbReference type="PAN-GO" id="Q9BXB7">
    <property type="GO annotations" value="2 GO annotations based on evolutionary models"/>
</dbReference>
<dbReference type="PhylomeDB" id="Q9BXB7"/>
<dbReference type="TreeFam" id="TF335624"/>
<dbReference type="PathwayCommons" id="Q9BXB7"/>
<dbReference type="SignaLink" id="Q9BXB7"/>
<dbReference type="BioGRID-ORCS" id="83893">
    <property type="hits" value="7 hits in 1141 CRISPR screens"/>
</dbReference>
<dbReference type="ChiTaRS" id="SPATA16">
    <property type="organism name" value="human"/>
</dbReference>
<dbReference type="GenomeRNAi" id="83893"/>
<dbReference type="Pharos" id="Q9BXB7">
    <property type="development level" value="Tbio"/>
</dbReference>
<dbReference type="PRO" id="PR:Q9BXB7"/>
<dbReference type="Proteomes" id="UP000005640">
    <property type="component" value="Chromosome 3"/>
</dbReference>
<dbReference type="RNAct" id="Q9BXB7">
    <property type="molecule type" value="protein"/>
</dbReference>
<dbReference type="Bgee" id="ENSG00000144962">
    <property type="expression patterns" value="Expressed in sperm and 37 other cell types or tissues"/>
</dbReference>
<dbReference type="ExpressionAtlas" id="Q9BXB7">
    <property type="expression patterns" value="baseline and differential"/>
</dbReference>
<dbReference type="GO" id="GO:0001669">
    <property type="term" value="C:acrosomal vesicle"/>
    <property type="evidence" value="ECO:0007669"/>
    <property type="project" value="UniProtKB-SubCell"/>
</dbReference>
<dbReference type="GO" id="GO:0005794">
    <property type="term" value="C:Golgi apparatus"/>
    <property type="evidence" value="ECO:0000314"/>
    <property type="project" value="UniProtKB"/>
</dbReference>
<dbReference type="GO" id="GO:0007286">
    <property type="term" value="P:spermatid development"/>
    <property type="evidence" value="ECO:0000250"/>
    <property type="project" value="UniProtKB"/>
</dbReference>
<dbReference type="GO" id="GO:0007283">
    <property type="term" value="P:spermatogenesis"/>
    <property type="evidence" value="ECO:0000318"/>
    <property type="project" value="GO_Central"/>
</dbReference>
<dbReference type="FunFam" id="1.25.40.10:FF:000281">
    <property type="entry name" value="Spermatogenesis associated 16"/>
    <property type="match status" value="1"/>
</dbReference>
<dbReference type="Gene3D" id="1.25.40.10">
    <property type="entry name" value="Tetratricopeptide repeat domain"/>
    <property type="match status" value="1"/>
</dbReference>
<dbReference type="InterPro" id="IPR029161">
    <property type="entry name" value="SPATA16"/>
</dbReference>
<dbReference type="InterPro" id="IPR011990">
    <property type="entry name" value="TPR-like_helical_dom_sf"/>
</dbReference>
<dbReference type="PANTHER" id="PTHR47228">
    <property type="entry name" value="SPERMATOGENESIS-ASSOCIATED PROTEIN 16"/>
    <property type="match status" value="1"/>
</dbReference>
<dbReference type="PANTHER" id="PTHR47228:SF1">
    <property type="entry name" value="SPERMATOGENESIS-ASSOCIATED PROTEIN 16"/>
    <property type="match status" value="1"/>
</dbReference>
<dbReference type="Pfam" id="PF15015">
    <property type="entry name" value="NYD-SP12_N"/>
    <property type="match status" value="1"/>
</dbReference>
<dbReference type="SUPFAM" id="SSF48452">
    <property type="entry name" value="TPR-like"/>
    <property type="match status" value="1"/>
</dbReference>
<reference key="1">
    <citation type="journal article" date="2003" name="Mol. Hum. Reprod.">
        <title>Identification and characterization of a novel human testis-specific Golgi protein, NYD-SP12.</title>
        <authorList>
            <person name="Xu M."/>
            <person name="Xiao J."/>
            <person name="Chen J."/>
            <person name="Li J."/>
            <person name="Yin L."/>
            <person name="Zhu H."/>
            <person name="Zhou Z."/>
            <person name="Sha J."/>
        </authorList>
    </citation>
    <scope>NUCLEOTIDE SEQUENCE [MRNA]</scope>
    <scope>FUNCTION</scope>
    <scope>TISSUE SPECIFICITY</scope>
    <scope>SUBCELLULAR LOCATION</scope>
    <scope>VARIANT VAL-286</scope>
    <source>
        <tissue>Testis</tissue>
    </source>
</reference>
<reference key="2">
    <citation type="journal article" date="2007" name="J. Mol. Evol.">
        <title>Rapid evolution, genetic variations, and functional association of the human spermatogenesis-related gene NYD-SP12.</title>
        <authorList>
            <person name="Zhang Q."/>
            <person name="Zhang F."/>
            <person name="Chen X.-H."/>
            <person name="Wang Y.-Q."/>
            <person name="Wang W.-Q."/>
            <person name="Lin A.A."/>
            <person name="Cavalli-Sforza L.L."/>
            <person name="Jin L."/>
            <person name="Huo R."/>
            <person name="Sha J.-H."/>
            <person name="Li Z."/>
            <person name="Su B."/>
        </authorList>
    </citation>
    <scope>NUCLEOTIDE SEQUENCE [GENOMIC DNA]</scope>
    <scope>VARIANTS SER-50; LYS-78; VAL-133; GLU-147; MET-423; VAL-509; THR-526 AND ARG-564</scope>
</reference>
<reference key="3">
    <citation type="journal article" date="2006" name="Nature">
        <title>The DNA sequence, annotation and analysis of human chromosome 3.</title>
        <authorList>
            <person name="Muzny D.M."/>
            <person name="Scherer S.E."/>
            <person name="Kaul R."/>
            <person name="Wang J."/>
            <person name="Yu J."/>
            <person name="Sudbrak R."/>
            <person name="Buhay C.J."/>
            <person name="Chen R."/>
            <person name="Cree A."/>
            <person name="Ding Y."/>
            <person name="Dugan-Rocha S."/>
            <person name="Gill R."/>
            <person name="Gunaratne P."/>
            <person name="Harris R.A."/>
            <person name="Hawes A.C."/>
            <person name="Hernandez J."/>
            <person name="Hodgson A.V."/>
            <person name="Hume J."/>
            <person name="Jackson A."/>
            <person name="Khan Z.M."/>
            <person name="Kovar-Smith C."/>
            <person name="Lewis L.R."/>
            <person name="Lozado R.J."/>
            <person name="Metzker M.L."/>
            <person name="Milosavljevic A."/>
            <person name="Miner G.R."/>
            <person name="Morgan M.B."/>
            <person name="Nazareth L.V."/>
            <person name="Scott G."/>
            <person name="Sodergren E."/>
            <person name="Song X.-Z."/>
            <person name="Steffen D."/>
            <person name="Wei S."/>
            <person name="Wheeler D.A."/>
            <person name="Wright M.W."/>
            <person name="Worley K.C."/>
            <person name="Yuan Y."/>
            <person name="Zhang Z."/>
            <person name="Adams C.Q."/>
            <person name="Ansari-Lari M.A."/>
            <person name="Ayele M."/>
            <person name="Brown M.J."/>
            <person name="Chen G."/>
            <person name="Chen Z."/>
            <person name="Clendenning J."/>
            <person name="Clerc-Blankenburg K.P."/>
            <person name="Chen R."/>
            <person name="Chen Z."/>
            <person name="Davis C."/>
            <person name="Delgado O."/>
            <person name="Dinh H.H."/>
            <person name="Dong W."/>
            <person name="Draper H."/>
            <person name="Ernst S."/>
            <person name="Fu G."/>
            <person name="Gonzalez-Garay M.L."/>
            <person name="Garcia D.K."/>
            <person name="Gillett W."/>
            <person name="Gu J."/>
            <person name="Hao B."/>
            <person name="Haugen E."/>
            <person name="Havlak P."/>
            <person name="He X."/>
            <person name="Hennig S."/>
            <person name="Hu S."/>
            <person name="Huang W."/>
            <person name="Jackson L.R."/>
            <person name="Jacob L.S."/>
            <person name="Kelly S.H."/>
            <person name="Kube M."/>
            <person name="Levy R."/>
            <person name="Li Z."/>
            <person name="Liu B."/>
            <person name="Liu J."/>
            <person name="Liu W."/>
            <person name="Lu J."/>
            <person name="Maheshwari M."/>
            <person name="Nguyen B.-V."/>
            <person name="Okwuonu G.O."/>
            <person name="Palmeiri A."/>
            <person name="Pasternak S."/>
            <person name="Perez L.M."/>
            <person name="Phelps K.A."/>
            <person name="Plopper F.J."/>
            <person name="Qiang B."/>
            <person name="Raymond C."/>
            <person name="Rodriguez R."/>
            <person name="Saenphimmachak C."/>
            <person name="Santibanez J."/>
            <person name="Shen H."/>
            <person name="Shen Y."/>
            <person name="Subramanian S."/>
            <person name="Tabor P.E."/>
            <person name="Verduzco D."/>
            <person name="Waldron L."/>
            <person name="Wang J."/>
            <person name="Wang J."/>
            <person name="Wang Q."/>
            <person name="Williams G.A."/>
            <person name="Wong G.K.-S."/>
            <person name="Yao Z."/>
            <person name="Zhang J."/>
            <person name="Zhang X."/>
            <person name="Zhao G."/>
            <person name="Zhou J."/>
            <person name="Zhou Y."/>
            <person name="Nelson D."/>
            <person name="Lehrach H."/>
            <person name="Reinhardt R."/>
            <person name="Naylor S.L."/>
            <person name="Yang H."/>
            <person name="Olson M."/>
            <person name="Weinstock G."/>
            <person name="Gibbs R.A."/>
        </authorList>
    </citation>
    <scope>NUCLEOTIDE SEQUENCE [LARGE SCALE GENOMIC DNA]</scope>
</reference>
<reference key="4">
    <citation type="journal article" date="2004" name="Genome Res.">
        <title>The status, quality, and expansion of the NIH full-length cDNA project: the Mammalian Gene Collection (MGC).</title>
        <authorList>
            <consortium name="The MGC Project Team"/>
        </authorList>
    </citation>
    <scope>NUCLEOTIDE SEQUENCE [LARGE SCALE MRNA]</scope>
    <scope>VARIANT GLY-90</scope>
</reference>
<reference key="5">
    <citation type="journal article" date="2007" name="Am. J. Hum. Genet.">
        <title>Homozygous mutation in SPATA16 is associated with male infertility in human globozoospermia.</title>
        <authorList>
            <person name="Dam A.H."/>
            <person name="Koscinski I."/>
            <person name="Kremer J.A."/>
            <person name="Moutou C."/>
            <person name="Jaeger A.S."/>
            <person name="Oudakker A.R."/>
            <person name="Tournaye H."/>
            <person name="Charlet N."/>
            <person name="Lagier-Tourenne C."/>
            <person name="van Bokhoven H."/>
            <person name="Viville S."/>
        </authorList>
    </citation>
    <scope>VARIANT SPGF6 GLN-283</scope>
</reference>
<accession>Q9BXB7</accession>
<accession>Q0R0N4</accession>
<accession>Q0R0S0</accession>
<accession>Q0R0W2</accession>
<accession>Q0R129</accession>
<accession>Q0R131</accession>
<accession>Q0R140</accession>
<accession>Q0R1B8</accession>
<accession>Q0R1G5</accession>
<accession>Q0R1I2</accession>
<accession>Q0R1J6</accession>
<accession>Q0R1S4</accession>
<accession>Q0R202</accession>
<accession>Q0R280</accession>
<accession>Q0R2F8</accession>
<accession>Q0R2N6</accession>
<accession>Q0R2N7</accession>
<accession>Q0R2R0</accession>
<accession>Q0R2R1</accession>
<accession>Q0R2S3</accession>
<accession>Q0R2S4</accession>
<accession>Q0R2S5</accession>
<accession>Q0R2T4</accession>
<accession>Q0R2T7</accession>
<accession>Q0R2U2</accession>
<accession>Q0R2U8</accession>
<accession>Q0R2U9</accession>
<accession>Q0R2V5</accession>
<accession>Q0R2V7</accession>
<accession>Q8NE67</accession>
<sequence length="569" mass="65263">MDAGSSRSLENAVNRIYHDQLVPKINTSKKMSTLAHPPNILEMSQEIKKNCGGKQVEITLERTKMTKGIKEKQSNDLEKAAFKRKAEGEEKPTRKKQAKITELDNQLITMPLPHIPLKNIMDVEMKLVYIDEMGVRYEFVESFMSTGSQPTCQAAEIVDPLSVHNFSFLPQIDKWLQVALKDASSCYRQKKYALAAGQFRTALELCSKGAVLGEPFDAPAEDIASVASFIETKLVTCYLRMRKPDLALNHAHRSIVLNPAYFRNHLRQATVFRCLERYSEAARSAMIADYMFWLGGGREESISKLIKLYWQAMIEEAITRAESFSVMYTPFATKIRADKIEKVKDAFTKTHPAYAEYMYTDLQALHMLPQTVDWSSFPPQQYLLTLGFKNKDDGKFLEKISSRKLPIFTEHKTPFGLTREDTVRQMETMGKRILPILDFIRSTQLNGSFPASSGVMEKLQYASLLSQLQRVKEQSQVINQAMAELATIPYLQDISQQEAELLQSLMADAMDTLEGRRNNNERVWNMIQKVGQIEDFLYQLEDSFLKTKKLRTARRQKTKMKRLQTVQQR</sequence>
<feature type="chain" id="PRO_0000315830" description="Spermatogenesis-associated protein 16">
    <location>
        <begin position="1"/>
        <end position="569"/>
    </location>
</feature>
<feature type="region of interest" description="Disordered" evidence="2">
    <location>
        <begin position="67"/>
        <end position="96"/>
    </location>
</feature>
<feature type="compositionally biased region" description="Basic and acidic residues" evidence="2">
    <location>
        <begin position="67"/>
        <end position="92"/>
    </location>
</feature>
<feature type="sequence variant" id="VAR_038329" description="In dbSNP:rs16846624." evidence="5">
    <original>N</original>
    <variation>S</variation>
    <location>
        <position position="50"/>
    </location>
</feature>
<feature type="sequence variant" id="VAR_038330" description="In dbSNP:rs1515441." evidence="5">
    <original>E</original>
    <variation>K</variation>
    <location>
        <position position="78"/>
    </location>
</feature>
<feature type="sequence variant" id="VAR_038331" description="In dbSNP:rs11558933." evidence="4">
    <original>E</original>
    <variation>G</variation>
    <location>
        <position position="90"/>
    </location>
</feature>
<feature type="sequence variant" id="VAR_038332" description="In dbSNP:rs1515442." evidence="5">
    <original>M</original>
    <variation>V</variation>
    <location>
        <position position="133"/>
    </location>
</feature>
<feature type="sequence variant" id="VAR_038333" description="In dbSNP:rs16846616." evidence="5">
    <original>G</original>
    <variation>E</variation>
    <location>
        <position position="147"/>
    </location>
</feature>
<feature type="sequence variant" id="VAR_038334" description="In SPGF6; dbSNP:rs137853118." evidence="6">
    <original>R</original>
    <variation>Q</variation>
    <location>
        <position position="283"/>
    </location>
</feature>
<feature type="sequence variant" id="VAR_038335" evidence="3">
    <original>M</original>
    <variation>V</variation>
    <location>
        <position position="286"/>
    </location>
</feature>
<feature type="sequence variant" id="VAR_038336" description="In dbSNP:rs373336427." evidence="5">
    <original>V</original>
    <variation>M</variation>
    <location>
        <position position="423"/>
    </location>
</feature>
<feature type="sequence variant" id="VAR_038337" description="In dbSNP:rs115095786." evidence="5">
    <original>A</original>
    <variation>V</variation>
    <location>
        <position position="509"/>
    </location>
</feature>
<feature type="sequence variant" id="VAR_038338" description="In dbSNP:rs62622782." evidence="5">
    <original>M</original>
    <variation>T</variation>
    <location>
        <position position="526"/>
    </location>
</feature>
<feature type="sequence variant" id="VAR_038339" description="In dbSNP:rs952207260." evidence="5">
    <original>Q</original>
    <variation>R</variation>
    <location>
        <position position="564"/>
    </location>
</feature>
<protein>
    <recommendedName>
        <fullName>Spermatogenesis-associated protein 16</fullName>
    </recommendedName>
    <alternativeName>
        <fullName>Testis development protein NYD-SP12</fullName>
    </alternativeName>
</protein>
<gene>
    <name type="primary">SPATA16</name>
</gene>
<evidence type="ECO:0000250" key="1">
    <source>
        <dbReference type="UniProtKB" id="Q8C636"/>
    </source>
</evidence>
<evidence type="ECO:0000256" key="2">
    <source>
        <dbReference type="SAM" id="MobiDB-lite"/>
    </source>
</evidence>
<evidence type="ECO:0000269" key="3">
    <source>
    </source>
</evidence>
<evidence type="ECO:0000269" key="4">
    <source>
    </source>
</evidence>
<evidence type="ECO:0000269" key="5">
    <source>
    </source>
</evidence>
<evidence type="ECO:0000269" key="6">
    <source>
    </source>
</evidence>
<evidence type="ECO:0000305" key="7"/>